<reference key="1">
    <citation type="journal article" date="1999" name="J. Biochem.">
        <title>Cloning of the RNA polymerase alpha subunit gene from Thermus thermophilus HB8 and characterization of the protein.</title>
        <authorList>
            <person name="Wada T."/>
            <person name="Yamazaki T."/>
            <person name="Kuramitsu S."/>
            <person name="Kyogoku Y."/>
        </authorList>
    </citation>
    <scope>NUCLEOTIDE SEQUENCE [GENOMIC DNA]</scope>
</reference>
<reference key="2">
    <citation type="submission" date="2004-11" db="EMBL/GenBank/DDBJ databases">
        <title>Complete genome sequence of Thermus thermophilus HB8.</title>
        <authorList>
            <person name="Masui R."/>
            <person name="Kurokawa K."/>
            <person name="Nakagawa N."/>
            <person name="Tokunaga F."/>
            <person name="Koyama Y."/>
            <person name="Shibata T."/>
            <person name="Oshima T."/>
            <person name="Yokoyama S."/>
            <person name="Yasunaga T."/>
            <person name="Kuramitsu S."/>
        </authorList>
    </citation>
    <scope>NUCLEOTIDE SEQUENCE [LARGE SCALE GENOMIC DNA]</scope>
    <source>
        <strain>ATCC 27634 / DSM 579 / HB8</strain>
    </source>
</reference>
<reference key="3">
    <citation type="journal article" date="1994" name="Eur. J. Biochem.">
        <title>Purification and characterization of the 30S ribosomal proteins from the bacterium Thermus thermophilus.</title>
        <authorList>
            <person name="Tsiboli P."/>
            <person name="Herfurth E."/>
            <person name="Choli T."/>
        </authorList>
    </citation>
    <scope>PROTEIN SEQUENCE OF 2-25</scope>
</reference>
<reference key="4">
    <citation type="journal article" date="2005" name="Proteomics">
        <title>Extending ribosomal protein identifications to unsequenced bacterial strains using matrix-assisted laser desorption/ionization mass spectrometry.</title>
        <authorList>
            <person name="Suh M.-J."/>
            <person name="Hamburg D.M."/>
            <person name="Gregory S.T."/>
            <person name="Dahlberg A.E."/>
            <person name="Limbach P.A."/>
        </authorList>
    </citation>
    <scope>MASS SPECTROMETRY</scope>
    <source>
        <strain>ATCC 27634 / DSM 579 / HB8</strain>
    </source>
</reference>
<reference key="5">
    <citation type="journal article" date="2000" name="Nature">
        <title>Structure of the 30S ribosomal subunit.</title>
        <authorList>
            <person name="Wimberly B.T."/>
            <person name="Brodersen D.E."/>
            <person name="Clemons W.M. Jr."/>
            <person name="Morgan-Warren R.J."/>
            <person name="Carter A.P."/>
            <person name="Vonrhein C."/>
            <person name="Hartsch T."/>
            <person name="Ramakrishnan V."/>
        </authorList>
    </citation>
    <scope>X-RAY CRYSTALLOGRAPHY (3.05 ANGSTROMS) OF THE 30S SUBUNIT</scope>
</reference>
<reference key="6">
    <citation type="journal article" date="2000" name="Cell">
        <title>Structure of functionally activated small ribosomal subunit at 3.3 A resolution.</title>
        <authorList>
            <person name="Schluenzen F."/>
            <person name="Tocilj A."/>
            <person name="Zarivach R."/>
            <person name="Harms J."/>
            <person name="Gluehmann M."/>
            <person name="Janell D."/>
            <person name="Bashan A."/>
            <person name="Bartels H."/>
            <person name="Agmon I."/>
            <person name="Franceschi F."/>
            <person name="Yonath A."/>
        </authorList>
    </citation>
    <scope>X-RAY CRYSTALLOGRAPHY (3.3 ANGSTROMS) OF THE 30S SUBUNIT</scope>
</reference>
<reference key="7">
    <citation type="journal article" date="2000" name="Cell">
        <title>The structural basis for the action of the antibiotics tetracycline, pactamycin, and hygromycin B on the 30S ribosomal subunit.</title>
        <authorList>
            <person name="Brodersen D.E."/>
            <person name="Clemons W.M. Jr."/>
            <person name="Carter A.P."/>
            <person name="Morgan-Warren R.J."/>
            <person name="Wimberly B.T."/>
            <person name="Ramakrishnan V."/>
        </authorList>
    </citation>
    <scope>X-RAY CRYSTALLOGRAPHY (3.3 ANGSTROMS) OF THE 30S SUBUNIT</scope>
</reference>
<reference key="8">
    <citation type="journal article" date="2000" name="Nature">
        <title>Functional insights from the structure of the 30S ribosomal subunit and its interactions with antibiotics.</title>
        <authorList>
            <person name="Carter A.P."/>
            <person name="Clemons W.M. Jr."/>
            <person name="Brodersen D.E."/>
            <person name="Morgan-Warren R.J."/>
            <person name="Wimberly B.T."/>
            <person name="Ramakrishnan V."/>
        </authorList>
    </citation>
    <scope>X-RAY CRYSTALLOGRAPHY (3.0 ANGSTROMS) OF THE 30S SUBUNIT</scope>
</reference>
<reference key="9">
    <citation type="journal article" date="2001" name="Cell">
        <title>The path of messenger RNA through the ribosome.</title>
        <authorList>
            <person name="Yusupova G.Z."/>
            <person name="Yusupov M.M."/>
            <person name="Cate J.H.D."/>
            <person name="Noller H.F."/>
        </authorList>
    </citation>
    <scope>X-RAY CRYSTALLOGRAPHY (5.0 ANGSTROMS) OF THE RIBOSOME</scope>
</reference>
<reference key="10">
    <citation type="journal article" date="2001" name="EMBO J.">
        <title>Crystal structures of complexes of the small ribosomal subunit with tetracycline, edeine and IF3.</title>
        <authorList>
            <person name="Pioletti M."/>
            <person name="Schluenzen F."/>
            <person name="Harms J."/>
            <person name="Zarivach R."/>
            <person name="Gluehmann M."/>
            <person name="Avila H."/>
            <person name="Bashan A."/>
            <person name="Bartels H."/>
            <person name="Auerbach T."/>
            <person name="Jacobi C."/>
            <person name="Hartsch T."/>
            <person name="Yonath A."/>
            <person name="Franceschi F."/>
        </authorList>
    </citation>
    <scope>X-RAY CRYSTALLOGRAPHY (3.2 ANGSTROMS) OF THE 30S SUBUNIT</scope>
</reference>
<reference key="11">
    <citation type="journal article" date="2001" name="Science">
        <title>Crystal structure of an initiation factor bound to the 30S ribosomal subunit.</title>
        <authorList>
            <person name="Carter A.P."/>
            <person name="Clemons W.M. Jr."/>
            <person name="Brodersen D.E."/>
            <person name="Morgan-Warren R.J."/>
            <person name="Hartsch T."/>
            <person name="Wimberly B.T."/>
            <person name="Ramakrishnan V."/>
        </authorList>
    </citation>
    <scope>X-RAY CRYSTALLOGRAPHY (3.2 ANGSTROMS) OF THE 30S SUBUNIT</scope>
</reference>
<reference key="12">
    <citation type="journal article" date="2001" name="Science">
        <title>Crystal structure of the ribosome at 5.5 A resolution.</title>
        <authorList>
            <person name="Yusupov M.M."/>
            <person name="Yusupova G.Z."/>
            <person name="Baucom A."/>
            <person name="Lieberman K."/>
            <person name="Earnest T.N."/>
            <person name="Cate J.H.D."/>
            <person name="Noller H.F."/>
        </authorList>
    </citation>
    <scope>X-RAY CRYSTALLOGRAPHY (5.5 ANGSTROMS) OF THE RIBOSOME</scope>
    <scope>INTERSUBUNIT BRIDGE FORMATION</scope>
</reference>
<reference key="13">
    <citation type="journal article" date="2001" name="Science">
        <title>Recognition of cognate transfer RNA by the 30S ribosomal subunit.</title>
        <authorList>
            <person name="Ogle J.M."/>
            <person name="Brodersen D.E."/>
            <person name="Clemons W.M. Jr."/>
            <person name="Tarry M.J."/>
            <person name="Carter A.P."/>
            <person name="Ramakrishnan V."/>
        </authorList>
    </citation>
    <scope>X-RAY CRYSTALLOGRAPHY (3.11 ANGSTROMS) OF THE 30S SUBUNIT</scope>
</reference>
<reference key="14">
    <citation type="journal article" date="2002" name="J. Mol. Biol.">
        <title>Crystal structure of the 30S ribosomal subunit from Thermus thermophilus: structure of the proteins and their interactions with 16S RNA.</title>
        <authorList>
            <person name="Brodersen D.E."/>
            <person name="Clemons W.M. Jr."/>
            <person name="Carter A.P."/>
            <person name="Wimberly B.T."/>
            <person name="Ramakrishnan V."/>
        </authorList>
    </citation>
    <scope>X-RAY CRYSTALLOGRAPHY (3.05 ANGSTROMS) OF THE 30S SUBUNIT</scope>
</reference>
<reference key="15">
    <citation type="journal article" date="2005" name="Cell">
        <title>Crystal structures of the ribosome in complex with release factors RF1 and RF2 bound to a cognate stop codon.</title>
        <authorList>
            <person name="Petry S."/>
            <person name="Brodersen D.E."/>
            <person name="Murphy F.V."/>
            <person name="Dunham C.M."/>
            <person name="Selmer M."/>
            <person name="Tarry M.J."/>
            <person name="Kelley A.C."/>
            <person name="Ramakrishnan V."/>
        </authorList>
    </citation>
    <scope>X-RAY CRYSTALLOGRAPHY (5.90 ANGSTROMS) OF 70S RIBOSOME IN COMPLEX WITH RF1 OR RF2</scope>
    <scope>SUBUNIT</scope>
</reference>
<reference key="16">
    <citation type="journal article" date="2008" name="Science">
        <title>Insights into translational termination from the structure of RF2 bound to the ribosome.</title>
        <authorList>
            <person name="Weixlbaumer A."/>
            <person name="Jin H."/>
            <person name="Neubauer C."/>
            <person name="Voorhees R.M."/>
            <person name="Petry S."/>
            <person name="Kelley A.C."/>
            <person name="Ramakrishnan V."/>
        </authorList>
    </citation>
    <scope>X-RAY CRYSTALLOGRAPHY (3.45 ANGSTROMS) OF 70S RIBOSOME IN COMPLEX WITH RF2</scope>
    <scope>SUBUNIT</scope>
</reference>
<reference key="17">
    <citation type="journal article" date="2010" name="Proc. Natl. Acad. Sci. U.S.A.">
        <title>Structure of the 70S ribosome bound to release factor 2 and a substrate analog provides insights into catalysis of peptide release.</title>
        <authorList>
            <person name="Jin H."/>
            <person name="Kelley A.C."/>
            <person name="Loakes D."/>
            <person name="Ramakrishnan V."/>
        </authorList>
    </citation>
    <scope>X-RAY CRYSTALLOGRAPHY (3.10 ANGSTROMS) OF 70S RIBOSOME IN COMPLEX WITH RF2</scope>
    <scope>SUBUNIT</scope>
</reference>
<protein>
    <recommendedName>
        <fullName evidence="4">Small ribosomal subunit protein uS13</fullName>
    </recommendedName>
    <alternativeName>
        <fullName>30S ribosomal protein S13</fullName>
    </alternativeName>
</protein>
<keyword id="KW-0002">3D-structure</keyword>
<keyword id="KW-0903">Direct protein sequencing</keyword>
<keyword id="KW-1185">Reference proteome</keyword>
<keyword id="KW-0687">Ribonucleoprotein</keyword>
<keyword id="KW-0689">Ribosomal protein</keyword>
<keyword id="KW-0694">RNA-binding</keyword>
<keyword id="KW-0699">rRNA-binding</keyword>
<keyword id="KW-0820">tRNA-binding</keyword>
<proteinExistence type="evidence at protein level"/>
<gene>
    <name type="primary">rpsM</name>
    <name type="synonym">rps13</name>
    <name type="ordered locus">TTHA1667</name>
</gene>
<evidence type="ECO:0000256" key="1">
    <source>
        <dbReference type="SAM" id="MobiDB-lite"/>
    </source>
</evidence>
<evidence type="ECO:0000269" key="2">
    <source>
    </source>
</evidence>
<evidence type="ECO:0000269" key="3">
    <source>
    </source>
</evidence>
<evidence type="ECO:0000305" key="4"/>
<evidence type="ECO:0007829" key="5">
    <source>
        <dbReference type="PDB" id="1J5E"/>
    </source>
</evidence>
<evidence type="ECO:0007829" key="6">
    <source>
        <dbReference type="PDB" id="1N32"/>
    </source>
</evidence>
<evidence type="ECO:0007829" key="7">
    <source>
        <dbReference type="PDB" id="2UUB"/>
    </source>
</evidence>
<evidence type="ECO:0007829" key="8">
    <source>
        <dbReference type="PDB" id="2VQE"/>
    </source>
</evidence>
<evidence type="ECO:0007829" key="9">
    <source>
        <dbReference type="PDB" id="4JI1"/>
    </source>
</evidence>
<name>RS13_THET8</name>
<dbReference type="EMBL" id="AB024328">
    <property type="protein sequence ID" value="BAA75546.1"/>
    <property type="molecule type" value="Genomic_DNA"/>
</dbReference>
<dbReference type="EMBL" id="AP008226">
    <property type="protein sequence ID" value="BAD71490.1"/>
    <property type="molecule type" value="Genomic_DNA"/>
</dbReference>
<dbReference type="RefSeq" id="WP_008633368.1">
    <property type="nucleotide sequence ID" value="NC_006461.1"/>
</dbReference>
<dbReference type="RefSeq" id="YP_144933.1">
    <property type="nucleotide sequence ID" value="NC_006461.1"/>
</dbReference>
<dbReference type="PDB" id="1FJG">
    <property type="method" value="X-ray"/>
    <property type="resolution" value="3.00 A"/>
    <property type="chains" value="M=1-126"/>
</dbReference>
<dbReference type="PDB" id="1HNW">
    <property type="method" value="X-ray"/>
    <property type="resolution" value="3.40 A"/>
    <property type="chains" value="M=1-126"/>
</dbReference>
<dbReference type="PDB" id="1HNX">
    <property type="method" value="X-ray"/>
    <property type="resolution" value="3.40 A"/>
    <property type="chains" value="M=1-126"/>
</dbReference>
<dbReference type="PDB" id="1HNZ">
    <property type="method" value="X-ray"/>
    <property type="resolution" value="3.30 A"/>
    <property type="chains" value="M=1-126"/>
</dbReference>
<dbReference type="PDB" id="1HR0">
    <property type="method" value="X-ray"/>
    <property type="resolution" value="3.20 A"/>
    <property type="chains" value="M=1-126"/>
</dbReference>
<dbReference type="PDB" id="1I94">
    <property type="method" value="X-ray"/>
    <property type="resolution" value="3.20 A"/>
    <property type="chains" value="M=2-126"/>
</dbReference>
<dbReference type="PDB" id="1I95">
    <property type="method" value="X-ray"/>
    <property type="resolution" value="4.50 A"/>
    <property type="chains" value="M=2-126"/>
</dbReference>
<dbReference type="PDB" id="1I96">
    <property type="method" value="X-ray"/>
    <property type="resolution" value="4.20 A"/>
    <property type="chains" value="M=2-126"/>
</dbReference>
<dbReference type="PDB" id="1I97">
    <property type="method" value="X-ray"/>
    <property type="resolution" value="4.50 A"/>
    <property type="chains" value="M=2-126"/>
</dbReference>
<dbReference type="PDB" id="1IBK">
    <property type="method" value="X-ray"/>
    <property type="resolution" value="3.31 A"/>
    <property type="chains" value="M=1-126"/>
</dbReference>
<dbReference type="PDB" id="1IBL">
    <property type="method" value="X-ray"/>
    <property type="resolution" value="3.11 A"/>
    <property type="chains" value="M=1-126"/>
</dbReference>
<dbReference type="PDB" id="1IBM">
    <property type="method" value="X-ray"/>
    <property type="resolution" value="3.31 A"/>
    <property type="chains" value="M=1-126"/>
</dbReference>
<dbReference type="PDB" id="1J5E">
    <property type="method" value="X-ray"/>
    <property type="resolution" value="3.05 A"/>
    <property type="chains" value="M=1-126"/>
</dbReference>
<dbReference type="PDB" id="1JGO">
    <property type="method" value="X-ray"/>
    <property type="resolution" value="5.60 A"/>
    <property type="chains" value="P=1-126"/>
</dbReference>
<dbReference type="PDB" id="1JGP">
    <property type="method" value="X-ray"/>
    <property type="resolution" value="7.00 A"/>
    <property type="chains" value="P=1-126"/>
</dbReference>
<dbReference type="PDB" id="1JGQ">
    <property type="method" value="X-ray"/>
    <property type="resolution" value="5.00 A"/>
    <property type="chains" value="P=1-126"/>
</dbReference>
<dbReference type="PDB" id="1MJ1">
    <property type="method" value="EM"/>
    <property type="resolution" value="13.00 A"/>
    <property type="chains" value="P=1-126"/>
</dbReference>
<dbReference type="PDB" id="1ML5">
    <property type="method" value="EM"/>
    <property type="resolution" value="14.00 A"/>
    <property type="chains" value="P=1-126"/>
</dbReference>
<dbReference type="PDB" id="1N32">
    <property type="method" value="X-ray"/>
    <property type="resolution" value="3.00 A"/>
    <property type="chains" value="M=1-126"/>
</dbReference>
<dbReference type="PDB" id="1N33">
    <property type="method" value="X-ray"/>
    <property type="resolution" value="3.35 A"/>
    <property type="chains" value="M=1-126"/>
</dbReference>
<dbReference type="PDB" id="1N34">
    <property type="method" value="X-ray"/>
    <property type="resolution" value="3.80 A"/>
    <property type="chains" value="M=1-126"/>
</dbReference>
<dbReference type="PDB" id="1N36">
    <property type="method" value="X-ray"/>
    <property type="resolution" value="3.65 A"/>
    <property type="chains" value="M=1-126"/>
</dbReference>
<dbReference type="PDB" id="1VVJ">
    <property type="method" value="X-ray"/>
    <property type="resolution" value="3.44 A"/>
    <property type="chains" value="QM/XM=1-126"/>
</dbReference>
<dbReference type="PDB" id="1VY4">
    <property type="method" value="X-ray"/>
    <property type="resolution" value="2.60 A"/>
    <property type="chains" value="AM/CM=1-126"/>
</dbReference>
<dbReference type="PDB" id="1VY5">
    <property type="method" value="X-ray"/>
    <property type="resolution" value="2.55 A"/>
    <property type="chains" value="AM/CM=1-126"/>
</dbReference>
<dbReference type="PDB" id="1VY6">
    <property type="method" value="X-ray"/>
    <property type="resolution" value="2.90 A"/>
    <property type="chains" value="AM/CM=1-126"/>
</dbReference>
<dbReference type="PDB" id="1VY7">
    <property type="method" value="X-ray"/>
    <property type="resolution" value="2.80 A"/>
    <property type="chains" value="AM/CM=1-126"/>
</dbReference>
<dbReference type="PDB" id="1XMO">
    <property type="method" value="X-ray"/>
    <property type="resolution" value="3.25 A"/>
    <property type="chains" value="M=1-126"/>
</dbReference>
<dbReference type="PDB" id="1XMQ">
    <property type="method" value="X-ray"/>
    <property type="resolution" value="3.00 A"/>
    <property type="chains" value="M=1-126"/>
</dbReference>
<dbReference type="PDB" id="1XNQ">
    <property type="method" value="X-ray"/>
    <property type="resolution" value="3.05 A"/>
    <property type="chains" value="M=1-126"/>
</dbReference>
<dbReference type="PDB" id="1XNR">
    <property type="method" value="X-ray"/>
    <property type="resolution" value="3.10 A"/>
    <property type="chains" value="M=1-126"/>
</dbReference>
<dbReference type="PDB" id="2E5L">
    <property type="method" value="X-ray"/>
    <property type="resolution" value="3.30 A"/>
    <property type="chains" value="M=2-126"/>
</dbReference>
<dbReference type="PDB" id="2F4V">
    <property type="method" value="X-ray"/>
    <property type="resolution" value="3.80 A"/>
    <property type="chains" value="M=1-126"/>
</dbReference>
<dbReference type="PDB" id="2HHH">
    <property type="method" value="X-ray"/>
    <property type="resolution" value="3.35 A"/>
    <property type="chains" value="M=1-126"/>
</dbReference>
<dbReference type="PDB" id="2UU9">
    <property type="method" value="X-ray"/>
    <property type="resolution" value="3.10 A"/>
    <property type="chains" value="M=2-126"/>
</dbReference>
<dbReference type="PDB" id="2UUA">
    <property type="method" value="X-ray"/>
    <property type="resolution" value="2.90 A"/>
    <property type="chains" value="M=2-126"/>
</dbReference>
<dbReference type="PDB" id="2UUB">
    <property type="method" value="X-ray"/>
    <property type="resolution" value="2.80 A"/>
    <property type="chains" value="M=2-126"/>
</dbReference>
<dbReference type="PDB" id="2UUC">
    <property type="method" value="X-ray"/>
    <property type="resolution" value="3.10 A"/>
    <property type="chains" value="M=2-126"/>
</dbReference>
<dbReference type="PDB" id="2UXB">
    <property type="method" value="X-ray"/>
    <property type="resolution" value="3.10 A"/>
    <property type="chains" value="M=2-126"/>
</dbReference>
<dbReference type="PDB" id="2UXC">
    <property type="method" value="X-ray"/>
    <property type="resolution" value="2.90 A"/>
    <property type="chains" value="M=2-126"/>
</dbReference>
<dbReference type="PDB" id="2UXD">
    <property type="method" value="X-ray"/>
    <property type="resolution" value="3.20 A"/>
    <property type="chains" value="M=2-126"/>
</dbReference>
<dbReference type="PDB" id="2VQE">
    <property type="method" value="X-ray"/>
    <property type="resolution" value="2.50 A"/>
    <property type="chains" value="M=1-126"/>
</dbReference>
<dbReference type="PDB" id="2VQF">
    <property type="method" value="X-ray"/>
    <property type="resolution" value="2.90 A"/>
    <property type="chains" value="M=1-126"/>
</dbReference>
<dbReference type="PDB" id="2ZM6">
    <property type="method" value="X-ray"/>
    <property type="resolution" value="3.30 A"/>
    <property type="chains" value="M=2-126"/>
</dbReference>
<dbReference type="PDB" id="3OTO">
    <property type="method" value="X-ray"/>
    <property type="resolution" value="3.69 A"/>
    <property type="chains" value="M=1-126"/>
</dbReference>
<dbReference type="PDB" id="3T1H">
    <property type="method" value="X-ray"/>
    <property type="resolution" value="3.11 A"/>
    <property type="chains" value="M=1-126"/>
</dbReference>
<dbReference type="PDB" id="3T1Y">
    <property type="method" value="X-ray"/>
    <property type="resolution" value="2.80 A"/>
    <property type="chains" value="M=1-126"/>
</dbReference>
<dbReference type="PDB" id="4AQY">
    <property type="method" value="X-ray"/>
    <property type="resolution" value="3.50 A"/>
    <property type="chains" value="M=1-126"/>
</dbReference>
<dbReference type="PDB" id="4B3M">
    <property type="method" value="X-ray"/>
    <property type="resolution" value="2.90 A"/>
    <property type="chains" value="M=1-126"/>
</dbReference>
<dbReference type="PDB" id="4B3R">
    <property type="method" value="X-ray"/>
    <property type="resolution" value="3.00 A"/>
    <property type="chains" value="M=1-126"/>
</dbReference>
<dbReference type="PDB" id="4B3S">
    <property type="method" value="X-ray"/>
    <property type="resolution" value="3.15 A"/>
    <property type="chains" value="M=1-126"/>
</dbReference>
<dbReference type="PDB" id="4B3T">
    <property type="method" value="X-ray"/>
    <property type="resolution" value="3.00 A"/>
    <property type="chains" value="M=1-126"/>
</dbReference>
<dbReference type="PDB" id="4DR1">
    <property type="method" value="X-ray"/>
    <property type="resolution" value="3.60 A"/>
    <property type="chains" value="M=1-126"/>
</dbReference>
<dbReference type="PDB" id="4DR2">
    <property type="method" value="X-ray"/>
    <property type="resolution" value="3.25 A"/>
    <property type="chains" value="M=1-126"/>
</dbReference>
<dbReference type="PDB" id="4DR3">
    <property type="method" value="X-ray"/>
    <property type="resolution" value="3.35 A"/>
    <property type="chains" value="M=1-126"/>
</dbReference>
<dbReference type="PDB" id="4DR4">
    <property type="method" value="X-ray"/>
    <property type="resolution" value="3.97 A"/>
    <property type="chains" value="M=1-126"/>
</dbReference>
<dbReference type="PDB" id="4DR5">
    <property type="method" value="X-ray"/>
    <property type="resolution" value="3.45 A"/>
    <property type="chains" value="M=1-126"/>
</dbReference>
<dbReference type="PDB" id="4DR6">
    <property type="method" value="X-ray"/>
    <property type="resolution" value="3.30 A"/>
    <property type="chains" value="M=1-126"/>
</dbReference>
<dbReference type="PDB" id="4DR7">
    <property type="method" value="X-ray"/>
    <property type="resolution" value="3.75 A"/>
    <property type="chains" value="M=1-126"/>
</dbReference>
<dbReference type="PDB" id="4DUY">
    <property type="method" value="X-ray"/>
    <property type="resolution" value="3.39 A"/>
    <property type="chains" value="M=1-126"/>
</dbReference>
<dbReference type="PDB" id="4DUZ">
    <property type="method" value="X-ray"/>
    <property type="resolution" value="3.65 A"/>
    <property type="chains" value="M=1-126"/>
</dbReference>
<dbReference type="PDB" id="4DV0">
    <property type="method" value="X-ray"/>
    <property type="resolution" value="3.85 A"/>
    <property type="chains" value="M=1-126"/>
</dbReference>
<dbReference type="PDB" id="4DV1">
    <property type="method" value="X-ray"/>
    <property type="resolution" value="3.85 A"/>
    <property type="chains" value="M=1-126"/>
</dbReference>
<dbReference type="PDB" id="4DV2">
    <property type="method" value="X-ray"/>
    <property type="resolution" value="3.65 A"/>
    <property type="chains" value="M=1-126"/>
</dbReference>
<dbReference type="PDB" id="4DV3">
    <property type="method" value="X-ray"/>
    <property type="resolution" value="3.55 A"/>
    <property type="chains" value="M=1-126"/>
</dbReference>
<dbReference type="PDB" id="4DV4">
    <property type="method" value="X-ray"/>
    <property type="resolution" value="3.65 A"/>
    <property type="chains" value="M=1-126"/>
</dbReference>
<dbReference type="PDB" id="4DV5">
    <property type="method" value="X-ray"/>
    <property type="resolution" value="3.68 A"/>
    <property type="chains" value="M=1-126"/>
</dbReference>
<dbReference type="PDB" id="4DV6">
    <property type="method" value="X-ray"/>
    <property type="resolution" value="3.30 A"/>
    <property type="chains" value="M=1-126"/>
</dbReference>
<dbReference type="PDB" id="4DV7">
    <property type="method" value="X-ray"/>
    <property type="resolution" value="3.29 A"/>
    <property type="chains" value="M=1-126"/>
</dbReference>
<dbReference type="PDB" id="4GKJ">
    <property type="method" value="X-ray"/>
    <property type="resolution" value="3.30 A"/>
    <property type="chains" value="M=2-126"/>
</dbReference>
<dbReference type="PDB" id="4GKK">
    <property type="method" value="X-ray"/>
    <property type="resolution" value="3.20 A"/>
    <property type="chains" value="M=2-126"/>
</dbReference>
<dbReference type="PDB" id="4JI0">
    <property type="method" value="X-ray"/>
    <property type="resolution" value="3.49 A"/>
    <property type="chains" value="M=1-126"/>
</dbReference>
<dbReference type="PDB" id="4JI1">
    <property type="method" value="X-ray"/>
    <property type="resolution" value="3.14 A"/>
    <property type="chains" value="M=1-126"/>
</dbReference>
<dbReference type="PDB" id="4JI2">
    <property type="method" value="X-ray"/>
    <property type="resolution" value="3.64 A"/>
    <property type="chains" value="M=1-126"/>
</dbReference>
<dbReference type="PDB" id="4JI3">
    <property type="method" value="X-ray"/>
    <property type="resolution" value="3.35 A"/>
    <property type="chains" value="M=1-126"/>
</dbReference>
<dbReference type="PDB" id="4JI4">
    <property type="method" value="X-ray"/>
    <property type="resolution" value="3.69 A"/>
    <property type="chains" value="M=1-126"/>
</dbReference>
<dbReference type="PDB" id="4JI5">
    <property type="method" value="X-ray"/>
    <property type="resolution" value="3.85 A"/>
    <property type="chains" value="M=1-126"/>
</dbReference>
<dbReference type="PDB" id="4JI6">
    <property type="method" value="X-ray"/>
    <property type="resolution" value="3.55 A"/>
    <property type="chains" value="M=1-126"/>
</dbReference>
<dbReference type="PDB" id="4JI7">
    <property type="method" value="X-ray"/>
    <property type="resolution" value="3.50 A"/>
    <property type="chains" value="M=1-126"/>
</dbReference>
<dbReference type="PDB" id="4JI8">
    <property type="method" value="X-ray"/>
    <property type="resolution" value="3.74 A"/>
    <property type="chains" value="M=1-126"/>
</dbReference>
<dbReference type="PDB" id="4JV5">
    <property type="method" value="X-ray"/>
    <property type="resolution" value="3.16 A"/>
    <property type="chains" value="M=2-121"/>
</dbReference>
<dbReference type="PDB" id="4JYA">
    <property type="method" value="X-ray"/>
    <property type="resolution" value="3.10 A"/>
    <property type="chains" value="M=2-121"/>
</dbReference>
<dbReference type="PDB" id="4K0K">
    <property type="method" value="X-ray"/>
    <property type="resolution" value="3.40 A"/>
    <property type="chains" value="M=2-122"/>
</dbReference>
<dbReference type="PDB" id="4KHP">
    <property type="method" value="X-ray"/>
    <property type="resolution" value="3.10 A"/>
    <property type="chains" value="M=2-121"/>
</dbReference>
<dbReference type="PDB" id="4L47">
    <property type="method" value="X-ray"/>
    <property type="resolution" value="3.22 A"/>
    <property type="chains" value="QM/XM=1-126"/>
</dbReference>
<dbReference type="PDB" id="4L71">
    <property type="method" value="X-ray"/>
    <property type="resolution" value="3.90 A"/>
    <property type="chains" value="QM/XM=1-126"/>
</dbReference>
<dbReference type="PDB" id="4LEL">
    <property type="method" value="X-ray"/>
    <property type="resolution" value="3.90 A"/>
    <property type="chains" value="QM/XM=1-126"/>
</dbReference>
<dbReference type="PDB" id="4LF4">
    <property type="method" value="X-ray"/>
    <property type="resolution" value="3.34 A"/>
    <property type="chains" value="M=1-126"/>
</dbReference>
<dbReference type="PDB" id="4LF5">
    <property type="method" value="X-ray"/>
    <property type="resolution" value="3.75 A"/>
    <property type="chains" value="M=1-126"/>
</dbReference>
<dbReference type="PDB" id="4LF6">
    <property type="method" value="X-ray"/>
    <property type="resolution" value="3.31 A"/>
    <property type="chains" value="M=1-126"/>
</dbReference>
<dbReference type="PDB" id="4LF7">
    <property type="method" value="X-ray"/>
    <property type="resolution" value="3.15 A"/>
    <property type="chains" value="M=1-126"/>
</dbReference>
<dbReference type="PDB" id="4LF8">
    <property type="method" value="X-ray"/>
    <property type="resolution" value="3.15 A"/>
    <property type="chains" value="M=1-126"/>
</dbReference>
<dbReference type="PDB" id="4LF9">
    <property type="method" value="X-ray"/>
    <property type="resolution" value="3.28 A"/>
    <property type="chains" value="M=1-126"/>
</dbReference>
<dbReference type="PDB" id="4LFA">
    <property type="method" value="X-ray"/>
    <property type="resolution" value="3.65 A"/>
    <property type="chains" value="M=1-126"/>
</dbReference>
<dbReference type="PDB" id="4LFB">
    <property type="method" value="X-ray"/>
    <property type="resolution" value="3.01 A"/>
    <property type="chains" value="M=1-126"/>
</dbReference>
<dbReference type="PDB" id="4LFC">
    <property type="method" value="X-ray"/>
    <property type="resolution" value="3.60 A"/>
    <property type="chains" value="M=1-126"/>
</dbReference>
<dbReference type="PDB" id="4LFZ">
    <property type="method" value="X-ray"/>
    <property type="resolution" value="3.92 A"/>
    <property type="chains" value="QM/XM=1-126"/>
</dbReference>
<dbReference type="PDB" id="4LNT">
    <property type="method" value="X-ray"/>
    <property type="resolution" value="2.94 A"/>
    <property type="chains" value="QM/XM=1-126"/>
</dbReference>
<dbReference type="PDB" id="4LSK">
    <property type="method" value="X-ray"/>
    <property type="resolution" value="3.48 A"/>
    <property type="chains" value="QM/XM=1-126"/>
</dbReference>
<dbReference type="PDB" id="4LT8">
    <property type="method" value="X-ray"/>
    <property type="resolution" value="3.14 A"/>
    <property type="chains" value="QM/XM=1-126"/>
</dbReference>
<dbReference type="PDB" id="4NXM">
    <property type="method" value="X-ray"/>
    <property type="resolution" value="3.65 A"/>
    <property type="chains" value="M=1-126"/>
</dbReference>
<dbReference type="PDB" id="4NXN">
    <property type="method" value="X-ray"/>
    <property type="resolution" value="3.54 A"/>
    <property type="chains" value="M=1-126"/>
</dbReference>
<dbReference type="PDB" id="4OX9">
    <property type="method" value="X-ray"/>
    <property type="resolution" value="3.80 A"/>
    <property type="chains" value="M=1-126"/>
</dbReference>
<dbReference type="PDB" id="4P6F">
    <property type="method" value="X-ray"/>
    <property type="resolution" value="3.60 A"/>
    <property type="chains" value="QM/XM=1-126"/>
</dbReference>
<dbReference type="PDB" id="4P70">
    <property type="method" value="X-ray"/>
    <property type="resolution" value="3.68 A"/>
    <property type="chains" value="QM/XM=1-126"/>
</dbReference>
<dbReference type="PDB" id="4TUA">
    <property type="method" value="X-ray"/>
    <property type="resolution" value="3.60 A"/>
    <property type="chains" value="QM/XM=1-126"/>
</dbReference>
<dbReference type="PDB" id="4TUB">
    <property type="method" value="X-ray"/>
    <property type="resolution" value="3.60 A"/>
    <property type="chains" value="QM/XM=1-126"/>
</dbReference>
<dbReference type="PDB" id="4TUC">
    <property type="method" value="X-ray"/>
    <property type="resolution" value="3.60 A"/>
    <property type="chains" value="QM/XM=1-126"/>
</dbReference>
<dbReference type="PDB" id="4TUD">
    <property type="method" value="X-ray"/>
    <property type="resolution" value="3.60 A"/>
    <property type="chains" value="QM/XM=1-126"/>
</dbReference>
<dbReference type="PDB" id="4TUE">
    <property type="method" value="X-ray"/>
    <property type="resolution" value="3.50 A"/>
    <property type="chains" value="QM/XM=1-126"/>
</dbReference>
<dbReference type="PDB" id="4V42">
    <property type="method" value="X-ray"/>
    <property type="resolution" value="5.50 A"/>
    <property type="chains" value="AP=1-126"/>
</dbReference>
<dbReference type="PDB" id="4V49">
    <property type="method" value="X-ray"/>
    <property type="resolution" value="8.70 A"/>
    <property type="chains" value="M=2-126"/>
</dbReference>
<dbReference type="PDB" id="4V4A">
    <property type="method" value="X-ray"/>
    <property type="resolution" value="9.50 A"/>
    <property type="chains" value="M=2-126"/>
</dbReference>
<dbReference type="PDB" id="4V4I">
    <property type="method" value="X-ray"/>
    <property type="resolution" value="3.71 A"/>
    <property type="chains" value="n=-"/>
</dbReference>
<dbReference type="PDB" id="4V4P">
    <property type="method" value="X-ray"/>
    <property type="resolution" value="5.50 A"/>
    <property type="chains" value="BP=1-126"/>
</dbReference>
<dbReference type="PDB" id="4V4R">
    <property type="method" value="X-ray"/>
    <property type="resolution" value="5.90 A"/>
    <property type="chains" value="AM=1-126"/>
</dbReference>
<dbReference type="PDB" id="4V4S">
    <property type="method" value="X-ray"/>
    <property type="resolution" value="6.76 A"/>
    <property type="chains" value="AM=1-126"/>
</dbReference>
<dbReference type="PDB" id="4V4T">
    <property type="method" value="X-ray"/>
    <property type="resolution" value="6.46 A"/>
    <property type="chains" value="AM=1-126"/>
</dbReference>
<dbReference type="PDB" id="4V4X">
    <property type="method" value="X-ray"/>
    <property type="resolution" value="5.00 A"/>
    <property type="chains" value="AP=1-126"/>
</dbReference>
<dbReference type="PDB" id="4V4Y">
    <property type="method" value="X-ray"/>
    <property type="resolution" value="5.50 A"/>
    <property type="chains" value="AP=1-126"/>
</dbReference>
<dbReference type="PDB" id="4V4Z">
    <property type="method" value="X-ray"/>
    <property type="resolution" value="4.51 A"/>
    <property type="chains" value="AP=1-126"/>
</dbReference>
<dbReference type="PDB" id="4V51">
    <property type="method" value="X-ray"/>
    <property type="resolution" value="2.80 A"/>
    <property type="chains" value="AM/CM=2-126"/>
</dbReference>
<dbReference type="PDB" id="4V5A">
    <property type="method" value="X-ray"/>
    <property type="resolution" value="3.50 A"/>
    <property type="chains" value="AM/CM=2-126"/>
</dbReference>
<dbReference type="PDB" id="4V5C">
    <property type="method" value="X-ray"/>
    <property type="resolution" value="3.30 A"/>
    <property type="chains" value="AM/CM=1-126"/>
</dbReference>
<dbReference type="PDB" id="4V5D">
    <property type="method" value="X-ray"/>
    <property type="resolution" value="3.50 A"/>
    <property type="chains" value="AM/CM=1-126"/>
</dbReference>
<dbReference type="PDB" id="4V5E">
    <property type="method" value="X-ray"/>
    <property type="resolution" value="3.45 A"/>
    <property type="chains" value="AM/CM=1-126"/>
</dbReference>
<dbReference type="PDB" id="4V5F">
    <property type="method" value="X-ray"/>
    <property type="resolution" value="3.60 A"/>
    <property type="chains" value="AM/CM=1-126"/>
</dbReference>
<dbReference type="PDB" id="4V5G">
    <property type="method" value="X-ray"/>
    <property type="resolution" value="3.60 A"/>
    <property type="chains" value="AM/CM=1-126"/>
</dbReference>
<dbReference type="PDB" id="4V5J">
    <property type="method" value="X-ray"/>
    <property type="resolution" value="3.10 A"/>
    <property type="chains" value="AM/CM=1-126"/>
</dbReference>
<dbReference type="PDB" id="4V5K">
    <property type="method" value="X-ray"/>
    <property type="resolution" value="3.20 A"/>
    <property type="chains" value="AM/CM=1-126"/>
</dbReference>
<dbReference type="PDB" id="4V5L">
    <property type="method" value="X-ray"/>
    <property type="resolution" value="3.10 A"/>
    <property type="chains" value="AM=1-126"/>
</dbReference>
<dbReference type="PDB" id="4V5M">
    <property type="method" value="EM"/>
    <property type="resolution" value="7.80 A"/>
    <property type="chains" value="AM=1-126"/>
</dbReference>
<dbReference type="PDB" id="4V5N">
    <property type="method" value="EM"/>
    <property type="resolution" value="7.60 A"/>
    <property type="chains" value="AM=1-126"/>
</dbReference>
<dbReference type="PDB" id="4V5P">
    <property type="method" value="X-ray"/>
    <property type="resolution" value="3.10 A"/>
    <property type="chains" value="AM/CM=1-126"/>
</dbReference>
<dbReference type="PDB" id="4V5Q">
    <property type="method" value="X-ray"/>
    <property type="resolution" value="3.10 A"/>
    <property type="chains" value="AM/CM=1-126"/>
</dbReference>
<dbReference type="PDB" id="4V5R">
    <property type="method" value="X-ray"/>
    <property type="resolution" value="3.10 A"/>
    <property type="chains" value="AM/CM=1-126"/>
</dbReference>
<dbReference type="PDB" id="4V5S">
    <property type="method" value="X-ray"/>
    <property type="resolution" value="3.10 A"/>
    <property type="chains" value="AM/CM=1-126"/>
</dbReference>
<dbReference type="PDB" id="4V68">
    <property type="method" value="EM"/>
    <property type="resolution" value="6.40 A"/>
    <property type="chains" value="AM=2-126"/>
</dbReference>
<dbReference type="PDB" id="4V6A">
    <property type="method" value="X-ray"/>
    <property type="resolution" value="3.10 A"/>
    <property type="chains" value="AM/CM=1-126"/>
</dbReference>
<dbReference type="PDB" id="4V6F">
    <property type="method" value="X-ray"/>
    <property type="resolution" value="3.10 A"/>
    <property type="chains" value="BP/CP=1-126"/>
</dbReference>
<dbReference type="PDB" id="4V6G">
    <property type="method" value="X-ray"/>
    <property type="resolution" value="3.50 A"/>
    <property type="chains" value="AP/CP=1-126"/>
</dbReference>
<dbReference type="PDB" id="4V7J">
    <property type="method" value="X-ray"/>
    <property type="resolution" value="3.30 A"/>
    <property type="chains" value="Am/Bm=1-126"/>
</dbReference>
<dbReference type="PDB" id="4V7K">
    <property type="method" value="X-ray"/>
    <property type="resolution" value="3.60 A"/>
    <property type="chains" value="Am/Bm=1-126"/>
</dbReference>
<dbReference type="PDB" id="4V7L">
    <property type="method" value="X-ray"/>
    <property type="resolution" value="3.00 A"/>
    <property type="chains" value="AM/CM=1-126"/>
</dbReference>
<dbReference type="PDB" id="4V7M">
    <property type="method" value="X-ray"/>
    <property type="resolution" value="3.45 A"/>
    <property type="chains" value="AM/CM=1-126"/>
</dbReference>
<dbReference type="PDB" id="4V7W">
    <property type="method" value="X-ray"/>
    <property type="resolution" value="3.00 A"/>
    <property type="chains" value="AM/CM=1-126"/>
</dbReference>
<dbReference type="PDB" id="4V7X">
    <property type="method" value="X-ray"/>
    <property type="resolution" value="3.00 A"/>
    <property type="chains" value="AM/CM=1-126"/>
</dbReference>
<dbReference type="PDB" id="4V7Y">
    <property type="method" value="X-ray"/>
    <property type="resolution" value="3.00 A"/>
    <property type="chains" value="AM/CM=1-126"/>
</dbReference>
<dbReference type="PDB" id="4V7Z">
    <property type="method" value="X-ray"/>
    <property type="resolution" value="3.10 A"/>
    <property type="chains" value="AM/CM=1-126"/>
</dbReference>
<dbReference type="PDB" id="4V87">
    <property type="method" value="X-ray"/>
    <property type="resolution" value="3.10 A"/>
    <property type="chains" value="BP/CP=1-126"/>
</dbReference>
<dbReference type="PDB" id="4V8A">
    <property type="method" value="X-ray"/>
    <property type="resolution" value="3.20 A"/>
    <property type="chains" value="CM/DM=1-126"/>
</dbReference>
<dbReference type="PDB" id="4V8B">
    <property type="method" value="X-ray"/>
    <property type="resolution" value="3.00 A"/>
    <property type="chains" value="AP/CP=1-126"/>
</dbReference>
<dbReference type="PDB" id="4V8C">
    <property type="method" value="X-ray"/>
    <property type="resolution" value="3.30 A"/>
    <property type="chains" value="CP/DP=1-126"/>
</dbReference>
<dbReference type="PDB" id="4V8D">
    <property type="method" value="X-ray"/>
    <property type="resolution" value="3.00 A"/>
    <property type="chains" value="AP/CP=1-126"/>
</dbReference>
<dbReference type="PDB" id="4V8E">
    <property type="method" value="X-ray"/>
    <property type="resolution" value="3.30 A"/>
    <property type="chains" value="BP/DP=1-126"/>
</dbReference>
<dbReference type="PDB" id="4V8F">
    <property type="method" value="X-ray"/>
    <property type="resolution" value="3.30 A"/>
    <property type="chains" value="BP/CP=1-126"/>
</dbReference>
<dbReference type="PDB" id="4V8G">
    <property type="method" value="X-ray"/>
    <property type="resolution" value="3.00 A"/>
    <property type="chains" value="AM/CM=1-126"/>
</dbReference>
<dbReference type="PDB" id="4V8H">
    <property type="method" value="X-ray"/>
    <property type="resolution" value="3.10 A"/>
    <property type="chains" value="AM/CM=1-126"/>
</dbReference>
<dbReference type="PDB" id="4V8I">
    <property type="method" value="X-ray"/>
    <property type="resolution" value="2.70 A"/>
    <property type="chains" value="AM/CM=1-126"/>
</dbReference>
<dbReference type="PDB" id="4V8J">
    <property type="method" value="X-ray"/>
    <property type="resolution" value="3.90 A"/>
    <property type="chains" value="AM/CM=1-126"/>
</dbReference>
<dbReference type="PDB" id="4V8N">
    <property type="method" value="X-ray"/>
    <property type="resolution" value="3.10 A"/>
    <property type="chains" value="AM/CM=1-126"/>
</dbReference>
<dbReference type="PDB" id="4V8O">
    <property type="method" value="X-ray"/>
    <property type="resolution" value="3.80 A"/>
    <property type="chains" value="AM=1-126"/>
</dbReference>
<dbReference type="PDB" id="4V8Q">
    <property type="method" value="X-ray"/>
    <property type="resolution" value="3.10 A"/>
    <property type="chains" value="BM=1-126"/>
</dbReference>
<dbReference type="PDB" id="4V8U">
    <property type="method" value="X-ray"/>
    <property type="resolution" value="3.70 A"/>
    <property type="chains" value="AM/CM=1-126"/>
</dbReference>
<dbReference type="PDB" id="4V8X">
    <property type="method" value="X-ray"/>
    <property type="resolution" value="3.35 A"/>
    <property type="chains" value="AM/CM=1-126"/>
</dbReference>
<dbReference type="PDB" id="4V90">
    <property type="method" value="X-ray"/>
    <property type="resolution" value="2.95 A"/>
    <property type="chains" value="AM=1-126"/>
</dbReference>
<dbReference type="PDB" id="4V95">
    <property type="method" value="X-ray"/>
    <property type="resolution" value="3.20 A"/>
    <property type="chains" value="AM/CM=1-126"/>
</dbReference>
<dbReference type="PDB" id="4V97">
    <property type="method" value="X-ray"/>
    <property type="resolution" value="3.52 A"/>
    <property type="chains" value="AM/CM=1-126"/>
</dbReference>
<dbReference type="PDB" id="4V9A">
    <property type="method" value="X-ray"/>
    <property type="resolution" value="3.30 A"/>
    <property type="chains" value="AP/CP=1-126"/>
</dbReference>
<dbReference type="PDB" id="4V9B">
    <property type="method" value="X-ray"/>
    <property type="resolution" value="3.10 A"/>
    <property type="chains" value="AP/CP=1-126"/>
</dbReference>
<dbReference type="PDB" id="4V9H">
    <property type="method" value="X-ray"/>
    <property type="resolution" value="2.86 A"/>
    <property type="chains" value="AM=2-125"/>
</dbReference>
<dbReference type="PDB" id="4V9I">
    <property type="method" value="X-ray"/>
    <property type="resolution" value="3.30 A"/>
    <property type="chains" value="AM/CM=2-125"/>
</dbReference>
<dbReference type="PDB" id="4V9R">
    <property type="method" value="X-ray"/>
    <property type="resolution" value="3.00 A"/>
    <property type="chains" value="AM/CM=1-126"/>
</dbReference>
<dbReference type="PDB" id="4V9S">
    <property type="method" value="X-ray"/>
    <property type="resolution" value="3.10 A"/>
    <property type="chains" value="AM/CM=1-126"/>
</dbReference>
<dbReference type="PDB" id="4W2E">
    <property type="method" value="X-ray"/>
    <property type="resolution" value="2.90 A"/>
    <property type="chains" value="m=1-126"/>
</dbReference>
<dbReference type="PDB" id="4W2F">
    <property type="method" value="X-ray"/>
    <property type="resolution" value="2.40 A"/>
    <property type="chains" value="AM/CM=1-126"/>
</dbReference>
<dbReference type="PDB" id="4W2G">
    <property type="method" value="X-ray"/>
    <property type="resolution" value="2.55 A"/>
    <property type="chains" value="AM/CM=1-126"/>
</dbReference>
<dbReference type="PDB" id="4W2H">
    <property type="method" value="X-ray"/>
    <property type="resolution" value="2.70 A"/>
    <property type="chains" value="AM/CM=1-126"/>
</dbReference>
<dbReference type="PDB" id="4W2I">
    <property type="method" value="X-ray"/>
    <property type="resolution" value="2.70 A"/>
    <property type="chains" value="AM/CM=1-126"/>
</dbReference>
<dbReference type="PDB" id="4W4G">
    <property type="method" value="X-ray"/>
    <property type="resolution" value="3.30 A"/>
    <property type="chains" value="QM/XM=1-126"/>
</dbReference>
<dbReference type="PDB" id="4WPO">
    <property type="method" value="X-ray"/>
    <property type="resolution" value="2.80 A"/>
    <property type="chains" value="BM/DM=1-126"/>
</dbReference>
<dbReference type="PDB" id="4WQ1">
    <property type="method" value="X-ray"/>
    <property type="resolution" value="3.10 A"/>
    <property type="chains" value="4A/4I=1-126"/>
</dbReference>
<dbReference type="PDB" id="4WQF">
    <property type="method" value="X-ray"/>
    <property type="resolution" value="2.80 A"/>
    <property type="chains" value="BM/DM=1-126"/>
</dbReference>
<dbReference type="PDB" id="4WQR">
    <property type="method" value="X-ray"/>
    <property type="resolution" value="3.15 A"/>
    <property type="chains" value="4A/4I=1-126"/>
</dbReference>
<dbReference type="PDB" id="4WQU">
    <property type="method" value="X-ray"/>
    <property type="resolution" value="2.80 A"/>
    <property type="chains" value="BM/DM=1-126"/>
</dbReference>
<dbReference type="PDB" id="4WQY">
    <property type="method" value="X-ray"/>
    <property type="resolution" value="2.80 A"/>
    <property type="chains" value="BM/DM=1-126"/>
</dbReference>
<dbReference type="PDB" id="4WR6">
    <property type="method" value="X-ray"/>
    <property type="resolution" value="3.05 A"/>
    <property type="chains" value="4A/4I=1-126"/>
</dbReference>
<dbReference type="PDB" id="4WRA">
    <property type="method" value="X-ray"/>
    <property type="resolution" value="3.05 A"/>
    <property type="chains" value="4A/4I=1-126"/>
</dbReference>
<dbReference type="PDB" id="4WRO">
    <property type="method" value="X-ray"/>
    <property type="resolution" value="3.05 A"/>
    <property type="chains" value="4I=1-126"/>
</dbReference>
<dbReference type="PDB" id="4WSD">
    <property type="method" value="X-ray"/>
    <property type="resolution" value="2.95 A"/>
    <property type="chains" value="4A/4I=1-126"/>
</dbReference>
<dbReference type="PDB" id="4WSM">
    <property type="method" value="X-ray"/>
    <property type="resolution" value="3.30 A"/>
    <property type="chains" value="4A/4I=1-126"/>
</dbReference>
<dbReference type="PDB" id="4WT1">
    <property type="method" value="X-ray"/>
    <property type="resolution" value="3.05 A"/>
    <property type="chains" value="4A/4I=1-126"/>
</dbReference>
<dbReference type="PDB" id="4WT8">
    <property type="method" value="X-ray"/>
    <property type="resolution" value="3.40 A"/>
    <property type="chains" value="AM/BM=2-125"/>
</dbReference>
<dbReference type="PDB" id="4WU1">
    <property type="method" value="X-ray"/>
    <property type="resolution" value="3.20 A"/>
    <property type="chains" value="4A/4I=1-126"/>
</dbReference>
<dbReference type="PDB" id="4WZD">
    <property type="method" value="X-ray"/>
    <property type="resolution" value="3.10 A"/>
    <property type="chains" value="4A/4I=1-126"/>
</dbReference>
<dbReference type="PDB" id="4WZO">
    <property type="method" value="X-ray"/>
    <property type="resolution" value="3.30 A"/>
    <property type="chains" value="4A/4I=1-126"/>
</dbReference>
<dbReference type="PDB" id="4X62">
    <property type="method" value="X-ray"/>
    <property type="resolution" value="3.45 A"/>
    <property type="chains" value="M=2-119"/>
</dbReference>
<dbReference type="PDB" id="4X64">
    <property type="method" value="X-ray"/>
    <property type="resolution" value="3.35 A"/>
    <property type="chains" value="M=2-119"/>
</dbReference>
<dbReference type="PDB" id="4X65">
    <property type="method" value="X-ray"/>
    <property type="resolution" value="3.35 A"/>
    <property type="chains" value="M=2-119"/>
</dbReference>
<dbReference type="PDB" id="4X66">
    <property type="method" value="X-ray"/>
    <property type="resolution" value="3.45 A"/>
    <property type="chains" value="M=2-119"/>
</dbReference>
<dbReference type="PDB" id="4Y4O">
    <property type="method" value="X-ray"/>
    <property type="resolution" value="2.30 A"/>
    <property type="chains" value="1m/2m=1-126"/>
</dbReference>
<dbReference type="PDB" id="4Y4P">
    <property type="method" value="X-ray"/>
    <property type="resolution" value="2.50 A"/>
    <property type="chains" value="1m/2m=1-126"/>
</dbReference>
<dbReference type="PDB" id="4YHH">
    <property type="method" value="X-ray"/>
    <property type="resolution" value="3.42 A"/>
    <property type="chains" value="M=2-120"/>
</dbReference>
<dbReference type="PDB" id="4YPB">
    <property type="method" value="X-ray"/>
    <property type="resolution" value="3.40 A"/>
    <property type="chains" value="QM/XM=1-126"/>
</dbReference>
<dbReference type="PDB" id="4YY3">
    <property type="method" value="X-ray"/>
    <property type="resolution" value="3.60 A"/>
    <property type="chains" value="M=1-126"/>
</dbReference>
<dbReference type="PDB" id="4YZV">
    <property type="method" value="X-ray"/>
    <property type="resolution" value="3.10 A"/>
    <property type="chains" value="QM/XM=1-126"/>
</dbReference>
<dbReference type="PDB" id="4Z3S">
    <property type="method" value="X-ray"/>
    <property type="resolution" value="2.65 A"/>
    <property type="chains" value="1m/2m=1-126"/>
</dbReference>
<dbReference type="PDB" id="4Z8C">
    <property type="method" value="X-ray"/>
    <property type="resolution" value="2.90 A"/>
    <property type="chains" value="1m/2m=1-126"/>
</dbReference>
<dbReference type="PDB" id="4ZER">
    <property type="method" value="X-ray"/>
    <property type="resolution" value="3.10 A"/>
    <property type="chains" value="1m/2m=2-117"/>
</dbReference>
<dbReference type="PDB" id="4ZSN">
    <property type="method" value="X-ray"/>
    <property type="resolution" value="3.60 A"/>
    <property type="chains" value="QM/XM=1-126"/>
</dbReference>
<dbReference type="PDB" id="5A9Z">
    <property type="method" value="EM"/>
    <property type="resolution" value="4.70 A"/>
    <property type="chains" value="BQ=2-115"/>
</dbReference>
<dbReference type="PDB" id="5AA0">
    <property type="method" value="EM"/>
    <property type="resolution" value="5.00 A"/>
    <property type="chains" value="BQ=2-115"/>
</dbReference>
<dbReference type="PDB" id="5BR8">
    <property type="method" value="X-ray"/>
    <property type="resolution" value="3.40 A"/>
    <property type="chains" value="M=1-126"/>
</dbReference>
<dbReference type="PDB" id="5CZP">
    <property type="method" value="X-ray"/>
    <property type="resolution" value="3.30 A"/>
    <property type="chains" value="QM/XM=1-126"/>
</dbReference>
<dbReference type="PDB" id="5D8B">
    <property type="method" value="X-ray"/>
    <property type="resolution" value="3.63 A"/>
    <property type="chains" value="JC/NA=1-126"/>
</dbReference>
<dbReference type="PDB" id="5DFE">
    <property type="method" value="X-ray"/>
    <property type="resolution" value="3.10 A"/>
    <property type="chains" value="QM/XM=1-126"/>
</dbReference>
<dbReference type="PDB" id="5DOX">
    <property type="method" value="X-ray"/>
    <property type="resolution" value="3.10 A"/>
    <property type="chains" value="1m/2m=1-126"/>
</dbReference>
<dbReference type="PDB" id="5DOY">
    <property type="method" value="X-ray"/>
    <property type="resolution" value="2.60 A"/>
    <property type="chains" value="1m/2m=1-126"/>
</dbReference>
<dbReference type="PDB" id="5E7K">
    <property type="method" value="X-ray"/>
    <property type="resolution" value="3.20 A"/>
    <property type="chains" value="4A/4I=1-126"/>
</dbReference>
<dbReference type="PDB" id="5E81">
    <property type="method" value="X-ray"/>
    <property type="resolution" value="2.95 A"/>
    <property type="chains" value="4A/4I=1-126"/>
</dbReference>
<dbReference type="PDB" id="5EL4">
    <property type="method" value="X-ray"/>
    <property type="resolution" value="3.15 A"/>
    <property type="chains" value="4A/4I=1-126"/>
</dbReference>
<dbReference type="PDB" id="5EL5">
    <property type="method" value="X-ray"/>
    <property type="resolution" value="3.15 A"/>
    <property type="chains" value="4A/4I=1-126"/>
</dbReference>
<dbReference type="PDB" id="5EL6">
    <property type="method" value="X-ray"/>
    <property type="resolution" value="3.10 A"/>
    <property type="chains" value="4A/4I=1-126"/>
</dbReference>
<dbReference type="PDB" id="5EL7">
    <property type="method" value="X-ray"/>
    <property type="resolution" value="3.15 A"/>
    <property type="chains" value="4A/4I=1-126"/>
</dbReference>
<dbReference type="PDB" id="5F8K">
    <property type="method" value="X-ray"/>
    <property type="resolution" value="2.80 A"/>
    <property type="chains" value="1m/2m=2-117"/>
</dbReference>
<dbReference type="PDB" id="5FDU">
    <property type="method" value="X-ray"/>
    <property type="resolution" value="2.90 A"/>
    <property type="chains" value="1m/2m=2-117"/>
</dbReference>
<dbReference type="PDB" id="5FDV">
    <property type="method" value="X-ray"/>
    <property type="resolution" value="2.80 A"/>
    <property type="chains" value="1m/2m=2-117"/>
</dbReference>
<dbReference type="PDB" id="5HAU">
    <property type="method" value="X-ray"/>
    <property type="resolution" value="3.00 A"/>
    <property type="chains" value="1m/2m=1-126"/>
</dbReference>
<dbReference type="PDB" id="5HCP">
    <property type="method" value="X-ray"/>
    <property type="resolution" value="2.89 A"/>
    <property type="chains" value="1m/2m=1-126"/>
</dbReference>
<dbReference type="PDB" id="5HCQ">
    <property type="method" value="X-ray"/>
    <property type="resolution" value="2.80 A"/>
    <property type="chains" value="1m/2m=1-126"/>
</dbReference>
<dbReference type="PDB" id="5HCR">
    <property type="method" value="X-ray"/>
    <property type="resolution" value="2.80 A"/>
    <property type="chains" value="1m/2m=1-126"/>
</dbReference>
<dbReference type="PDB" id="5HD1">
    <property type="method" value="X-ray"/>
    <property type="resolution" value="2.70 A"/>
    <property type="chains" value="1m/2m=1-126"/>
</dbReference>
<dbReference type="PDB" id="5IB7">
    <property type="method" value="X-ray"/>
    <property type="resolution" value="2.99 A"/>
    <property type="chains" value="4A/4I=1-126"/>
</dbReference>
<dbReference type="PDB" id="5IB8">
    <property type="method" value="X-ray"/>
    <property type="resolution" value="3.13 A"/>
    <property type="chains" value="4A/4I=1-126"/>
</dbReference>
<dbReference type="PDB" id="5IBB">
    <property type="method" value="X-ray"/>
    <property type="resolution" value="2.96 A"/>
    <property type="chains" value="4A/4I=1-126"/>
</dbReference>
<dbReference type="PDB" id="5IMQ">
    <property type="method" value="EM"/>
    <property type="resolution" value="3.80 A"/>
    <property type="chains" value="Q=1-126"/>
</dbReference>
<dbReference type="PDB" id="5IMR">
    <property type="method" value="EM"/>
    <property type="chains" value="Q=1-126"/>
</dbReference>
<dbReference type="PDB" id="5IWA">
    <property type="method" value="X-ray"/>
    <property type="resolution" value="3.50 A"/>
    <property type="chains" value="M=2-126"/>
</dbReference>
<dbReference type="PDB" id="5J30">
    <property type="method" value="X-ray"/>
    <property type="resolution" value="3.20 A"/>
    <property type="chains" value="QM/XM=1-126"/>
</dbReference>
<dbReference type="PDB" id="5J3C">
    <property type="method" value="X-ray"/>
    <property type="resolution" value="3.04 A"/>
    <property type="chains" value="QM/XM=1-126"/>
</dbReference>
<dbReference type="PDB" id="5J4B">
    <property type="method" value="X-ray"/>
    <property type="resolution" value="2.60 A"/>
    <property type="chains" value="1m/2m=1-126"/>
</dbReference>
<dbReference type="PDB" id="5J4C">
    <property type="method" value="X-ray"/>
    <property type="resolution" value="2.80 A"/>
    <property type="chains" value="1m/2m=1-126"/>
</dbReference>
<dbReference type="PDB" id="5J8B">
    <property type="method" value="X-ray"/>
    <property type="resolution" value="2.60 A"/>
    <property type="chains" value="m=1-126"/>
</dbReference>
<dbReference type="PDB" id="5LMN">
    <property type="method" value="EM"/>
    <property type="resolution" value="3.55 A"/>
    <property type="chains" value="M=1-126"/>
</dbReference>
<dbReference type="PDB" id="5LMO">
    <property type="method" value="EM"/>
    <property type="resolution" value="4.30 A"/>
    <property type="chains" value="M=1-126"/>
</dbReference>
<dbReference type="PDB" id="5LMP">
    <property type="method" value="EM"/>
    <property type="resolution" value="5.35 A"/>
    <property type="chains" value="M=1-126"/>
</dbReference>
<dbReference type="PDB" id="5LMQ">
    <property type="method" value="EM"/>
    <property type="resolution" value="4.20 A"/>
    <property type="chains" value="M=1-126"/>
</dbReference>
<dbReference type="PDB" id="5LMR">
    <property type="method" value="EM"/>
    <property type="resolution" value="4.45 A"/>
    <property type="chains" value="M=1-126"/>
</dbReference>
<dbReference type="PDB" id="5LMS">
    <property type="method" value="EM"/>
    <property type="resolution" value="5.10 A"/>
    <property type="chains" value="M=1-126"/>
</dbReference>
<dbReference type="PDB" id="5LMT">
    <property type="method" value="EM"/>
    <property type="resolution" value="4.15 A"/>
    <property type="chains" value="M=1-126"/>
</dbReference>
<dbReference type="PDB" id="5LMU">
    <property type="method" value="EM"/>
    <property type="resolution" value="4.00 A"/>
    <property type="chains" value="M=1-126"/>
</dbReference>
<dbReference type="PDB" id="5LMV">
    <property type="method" value="EM"/>
    <property type="resolution" value="4.90 A"/>
    <property type="chains" value="M=1-126"/>
</dbReference>
<dbReference type="PDB" id="5NDJ">
    <property type="method" value="X-ray"/>
    <property type="resolution" value="3.15 A"/>
    <property type="chains" value="4A/4I=1-126"/>
</dbReference>
<dbReference type="PDB" id="5NDK">
    <property type="method" value="X-ray"/>
    <property type="resolution" value="2.95 A"/>
    <property type="chains" value="4A/4I=1-126"/>
</dbReference>
<dbReference type="PDB" id="5OT7">
    <property type="method" value="EM"/>
    <property type="resolution" value="3.80 A"/>
    <property type="chains" value="L=2-120"/>
</dbReference>
<dbReference type="PDB" id="5UQ7">
    <property type="method" value="EM"/>
    <property type="resolution" value="3.50 A"/>
    <property type="chains" value="m=3-116"/>
</dbReference>
<dbReference type="PDB" id="5UQ8">
    <property type="method" value="EM"/>
    <property type="resolution" value="3.20 A"/>
    <property type="chains" value="m=3-116"/>
</dbReference>
<dbReference type="PDB" id="5VP2">
    <property type="method" value="X-ray"/>
    <property type="resolution" value="2.80 A"/>
    <property type="chains" value="1m/2m=1-126"/>
</dbReference>
<dbReference type="PDB" id="5VPO">
    <property type="method" value="X-ray"/>
    <property type="resolution" value="3.34 A"/>
    <property type="chains" value="QM/XM=1-126"/>
</dbReference>
<dbReference type="PDB" id="5VPP">
    <property type="method" value="X-ray"/>
    <property type="resolution" value="3.90 A"/>
    <property type="chains" value="QM/XM=1-126"/>
</dbReference>
<dbReference type="PDB" id="5W4K">
    <property type="method" value="X-ray"/>
    <property type="resolution" value="2.70 A"/>
    <property type="chains" value="1m/2m=1-126"/>
</dbReference>
<dbReference type="PDB" id="5WIS">
    <property type="method" value="X-ray"/>
    <property type="resolution" value="2.70 A"/>
    <property type="chains" value="1m/2m=1-126"/>
</dbReference>
<dbReference type="PDB" id="5WIT">
    <property type="method" value="X-ray"/>
    <property type="resolution" value="2.60 A"/>
    <property type="chains" value="1m/2m=1-126"/>
</dbReference>
<dbReference type="PDB" id="5WNP">
    <property type="method" value="X-ray"/>
    <property type="resolution" value="3.30 A"/>
    <property type="chains" value="M=2-119"/>
</dbReference>
<dbReference type="PDB" id="5WNQ">
    <property type="method" value="X-ray"/>
    <property type="resolution" value="3.50 A"/>
    <property type="chains" value="M=2-119"/>
</dbReference>
<dbReference type="PDB" id="5WNR">
    <property type="method" value="X-ray"/>
    <property type="resolution" value="3.50 A"/>
    <property type="chains" value="M=2-119"/>
</dbReference>
<dbReference type="PDB" id="5WNS">
    <property type="method" value="X-ray"/>
    <property type="resolution" value="3.50 A"/>
    <property type="chains" value="M=2-119"/>
</dbReference>
<dbReference type="PDB" id="5WNT">
    <property type="method" value="X-ray"/>
    <property type="resolution" value="3.30 A"/>
    <property type="chains" value="M=2-119"/>
</dbReference>
<dbReference type="PDB" id="5WNU">
    <property type="method" value="X-ray"/>
    <property type="resolution" value="3.40 A"/>
    <property type="chains" value="M=2-119"/>
</dbReference>
<dbReference type="PDB" id="5WNV">
    <property type="method" value="X-ray"/>
    <property type="resolution" value="3.30 A"/>
    <property type="chains" value="M=2-119"/>
</dbReference>
<dbReference type="PDB" id="5ZLU">
    <property type="method" value="EM"/>
    <property type="resolution" value="3.60 A"/>
    <property type="chains" value="R=1-126"/>
</dbReference>
<dbReference type="PDB" id="6BUW">
    <property type="method" value="X-ray"/>
    <property type="resolution" value="3.50 A"/>
    <property type="chains" value="QM/XM=1-126"/>
</dbReference>
<dbReference type="PDB" id="6BZ6">
    <property type="method" value="X-ray"/>
    <property type="resolution" value="3.18 A"/>
    <property type="chains" value="QM/XM=1-126"/>
</dbReference>
<dbReference type="PDB" id="6BZ7">
    <property type="method" value="X-ray"/>
    <property type="resolution" value="3.68 A"/>
    <property type="chains" value="QM/XM=1-126"/>
</dbReference>
<dbReference type="PDB" id="6BZ8">
    <property type="method" value="X-ray"/>
    <property type="resolution" value="3.74 A"/>
    <property type="chains" value="QM/XM=1-126"/>
</dbReference>
<dbReference type="PDB" id="6C5L">
    <property type="method" value="X-ray"/>
    <property type="resolution" value="3.20 A"/>
    <property type="chains" value="AM/CM=1-126"/>
</dbReference>
<dbReference type="PDB" id="6CAE">
    <property type="method" value="X-ray"/>
    <property type="resolution" value="2.60 A"/>
    <property type="chains" value="1m/2m=1-126"/>
</dbReference>
<dbReference type="PDB" id="6CAO">
    <property type="method" value="X-ray"/>
    <property type="resolution" value="3.45 A"/>
    <property type="chains" value="M=2-119"/>
</dbReference>
<dbReference type="PDB" id="6CAP">
    <property type="method" value="X-ray"/>
    <property type="resolution" value="3.40 A"/>
    <property type="chains" value="M=2-119"/>
</dbReference>
<dbReference type="PDB" id="6CAQ">
    <property type="method" value="X-ray"/>
    <property type="resolution" value="3.40 A"/>
    <property type="chains" value="M=2-119"/>
</dbReference>
<dbReference type="PDB" id="6CAR">
    <property type="method" value="X-ray"/>
    <property type="resolution" value="3.40 A"/>
    <property type="chains" value="M=2-126"/>
</dbReference>
<dbReference type="PDB" id="6CAS">
    <property type="method" value="X-ray"/>
    <property type="resolution" value="3.50 A"/>
    <property type="chains" value="M=2-126"/>
</dbReference>
<dbReference type="PDB" id="6CFJ">
    <property type="method" value="X-ray"/>
    <property type="resolution" value="2.80 A"/>
    <property type="chains" value="1m/2m=1-126"/>
</dbReference>
<dbReference type="PDB" id="6CFK">
    <property type="method" value="X-ray"/>
    <property type="resolution" value="2.70 A"/>
    <property type="chains" value="1m/2m=1-126"/>
</dbReference>
<dbReference type="PDB" id="6CFL">
    <property type="method" value="X-ray"/>
    <property type="resolution" value="2.60 A"/>
    <property type="chains" value="1m/2m=1-126"/>
</dbReference>
<dbReference type="PDB" id="6CZR">
    <property type="method" value="X-ray"/>
    <property type="resolution" value="3.14 A"/>
    <property type="chains" value="1m/2m=2-117"/>
</dbReference>
<dbReference type="PDB" id="6DTI">
    <property type="method" value="X-ray"/>
    <property type="resolution" value="3.54 A"/>
    <property type="chains" value="M=1-126"/>
</dbReference>
<dbReference type="PDB" id="6FKR">
    <property type="method" value="X-ray"/>
    <property type="resolution" value="3.20 A"/>
    <property type="chains" value="1m/2m=2-117"/>
</dbReference>
<dbReference type="PDB" id="6GSJ">
    <property type="method" value="X-ray"/>
    <property type="resolution" value="2.96 A"/>
    <property type="chains" value="4A/4I=1-126"/>
</dbReference>
<dbReference type="PDB" id="6GSK">
    <property type="method" value="X-ray"/>
    <property type="resolution" value="3.36 A"/>
    <property type="chains" value="4A/4I=1-126"/>
</dbReference>
<dbReference type="PDB" id="6GSL">
    <property type="method" value="X-ray"/>
    <property type="resolution" value="3.16 A"/>
    <property type="chains" value="4A/4I=1-126"/>
</dbReference>
<dbReference type="PDB" id="6GZQ">
    <property type="method" value="EM"/>
    <property type="resolution" value="3.28 A"/>
    <property type="chains" value="M2=2-118"/>
</dbReference>
<dbReference type="PDB" id="6GZX">
    <property type="method" value="EM"/>
    <property type="resolution" value="4.57 A"/>
    <property type="chains" value="M3/M4=2-118"/>
</dbReference>
<dbReference type="PDB" id="6GZZ">
    <property type="method" value="EM"/>
    <property type="resolution" value="4.13 A"/>
    <property type="chains" value="M3/M4=2-118"/>
</dbReference>
<dbReference type="PDB" id="6MKN">
    <property type="method" value="X-ray"/>
    <property type="resolution" value="3.46 A"/>
    <property type="chains" value="M=1-126"/>
</dbReference>
<dbReference type="PDB" id="6MPF">
    <property type="method" value="X-ray"/>
    <property type="resolution" value="3.33 A"/>
    <property type="chains" value="M=2-126"/>
</dbReference>
<dbReference type="PDB" id="6MPI">
    <property type="method" value="X-ray"/>
    <property type="resolution" value="3.33 A"/>
    <property type="chains" value="M=1-126"/>
</dbReference>
<dbReference type="PDB" id="6N9E">
    <property type="method" value="X-ray"/>
    <property type="resolution" value="3.70 A"/>
    <property type="chains" value="1m/2m=1-126"/>
</dbReference>
<dbReference type="PDB" id="6N9F">
    <property type="method" value="X-ray"/>
    <property type="resolution" value="3.70 A"/>
    <property type="chains" value="1m/2m=1-126"/>
</dbReference>
<dbReference type="PDB" id="6ND5">
    <property type="method" value="X-ray"/>
    <property type="resolution" value="2.60 A"/>
    <property type="chains" value="1m/2m=1-126"/>
</dbReference>
<dbReference type="PDB" id="6ND6">
    <property type="method" value="X-ray"/>
    <property type="resolution" value="2.85 A"/>
    <property type="chains" value="1m/2m=1-126"/>
</dbReference>
<dbReference type="PDB" id="6NDK">
    <property type="method" value="X-ray"/>
    <property type="resolution" value="3.64 A"/>
    <property type="chains" value="QM/XM=1-126"/>
</dbReference>
<dbReference type="PDB" id="6NSH">
    <property type="method" value="X-ray"/>
    <property type="resolution" value="3.40 A"/>
    <property type="chains" value="QM/XM=1-126"/>
</dbReference>
<dbReference type="PDB" id="6NTA">
    <property type="method" value="X-ray"/>
    <property type="resolution" value="3.10 A"/>
    <property type="chains" value="QM/XM=1-126"/>
</dbReference>
<dbReference type="PDB" id="6NUO">
    <property type="method" value="X-ray"/>
    <property type="resolution" value="3.20 A"/>
    <property type="chains" value="QM/XM=1-126"/>
</dbReference>
<dbReference type="PDB" id="6NWY">
    <property type="method" value="X-ray"/>
    <property type="resolution" value="3.50 A"/>
    <property type="chains" value="QM/XM=1-126"/>
</dbReference>
<dbReference type="PDB" id="6NY6">
    <property type="method" value="X-ray"/>
    <property type="resolution" value="3.74 A"/>
    <property type="chains" value="M=1-126"/>
</dbReference>
<dbReference type="PDB" id="6O3M">
    <property type="method" value="X-ray"/>
    <property type="resolution" value="3.97 A"/>
    <property type="chains" value="QM/XM=1-126"/>
</dbReference>
<dbReference type="PDB" id="6O97">
    <property type="method" value="X-ray"/>
    <property type="resolution" value="2.75 A"/>
    <property type="chains" value="1m/2m=1-126"/>
</dbReference>
<dbReference type="PDB" id="6OF1">
    <property type="method" value="X-ray"/>
    <property type="resolution" value="2.80 A"/>
    <property type="chains" value="1m/2m=1-126"/>
</dbReference>
<dbReference type="PDB" id="6OF6">
    <property type="method" value="X-ray"/>
    <property type="resolution" value="3.20 A"/>
    <property type="chains" value="QM/XM=1-126"/>
</dbReference>
<dbReference type="PDB" id="6OJ2">
    <property type="method" value="X-ray"/>
    <property type="resolution" value="3.20 A"/>
    <property type="chains" value="QM/XM=1-126"/>
</dbReference>
<dbReference type="PDB" id="6OPE">
    <property type="method" value="X-ray"/>
    <property type="resolution" value="3.10 A"/>
    <property type="chains" value="QM/XM=1-126"/>
</dbReference>
<dbReference type="PDB" id="6ORD">
    <property type="method" value="X-ray"/>
    <property type="resolution" value="3.10 A"/>
    <property type="chains" value="QM/XM=1-126"/>
</dbReference>
<dbReference type="PDB" id="6OSI">
    <property type="method" value="X-ray"/>
    <property type="resolution" value="4.14 A"/>
    <property type="chains" value="QM/XM=1-126"/>
</dbReference>
<dbReference type="PDB" id="6OTR">
    <property type="method" value="X-ray"/>
    <property type="resolution" value="3.12 A"/>
    <property type="chains" value="QM/XM=1-126"/>
</dbReference>
<dbReference type="PDB" id="6OXA">
    <property type="method" value="X-ray"/>
    <property type="resolution" value="3.25 A"/>
    <property type="chains" value="QM/XM=1-126"/>
</dbReference>
<dbReference type="PDB" id="6OXI">
    <property type="method" value="X-ray"/>
    <property type="resolution" value="3.50 A"/>
    <property type="chains" value="QM/XM=1-126"/>
</dbReference>
<dbReference type="PDB" id="6Q95">
    <property type="method" value="EM"/>
    <property type="resolution" value="3.70 A"/>
    <property type="chains" value="r=2-121"/>
</dbReference>
<dbReference type="PDB" id="6QNQ">
    <property type="method" value="X-ray"/>
    <property type="resolution" value="3.50 A"/>
    <property type="chains" value="4A/4I=1-126"/>
</dbReference>
<dbReference type="PDB" id="6QNR">
    <property type="method" value="X-ray"/>
    <property type="resolution" value="3.10 A"/>
    <property type="chains" value="4A/4I=1-126"/>
</dbReference>
<dbReference type="PDB" id="6UCQ">
    <property type="method" value="X-ray"/>
    <property type="resolution" value="3.50 A"/>
    <property type="chains" value="1m/2m=1-126"/>
</dbReference>
<dbReference type="PDB" id="6UO1">
    <property type="method" value="X-ray"/>
    <property type="resolution" value="2.95 A"/>
    <property type="chains" value="1m/2m=1-126"/>
</dbReference>
<dbReference type="PDB" id="6XHV">
    <property type="method" value="X-ray"/>
    <property type="resolution" value="2.40 A"/>
    <property type="chains" value="1m/2m=1-126"/>
</dbReference>
<dbReference type="PDB" id="6XHW">
    <property type="method" value="X-ray"/>
    <property type="resolution" value="2.50 A"/>
    <property type="chains" value="1m/2m=1-126"/>
</dbReference>
<dbReference type="PDB" id="6XHX">
    <property type="method" value="X-ray"/>
    <property type="resolution" value="2.55 A"/>
    <property type="chains" value="1m/2m=1-126"/>
</dbReference>
<dbReference type="PDB" id="6XHY">
    <property type="method" value="X-ray"/>
    <property type="resolution" value="2.60 A"/>
    <property type="chains" value="1m/2m=1-126"/>
</dbReference>
<dbReference type="PDB" id="6XQD">
    <property type="method" value="X-ray"/>
    <property type="resolution" value="2.80 A"/>
    <property type="chains" value="1m/2m=1-126"/>
</dbReference>
<dbReference type="PDB" id="6XQE">
    <property type="method" value="X-ray"/>
    <property type="resolution" value="3.00 A"/>
    <property type="chains" value="1m/2m=1-126"/>
</dbReference>
<dbReference type="PDB" id="7AZO">
    <property type="method" value="X-ray"/>
    <property type="resolution" value="3.30 A"/>
    <property type="chains" value="S13A/S13B=1-126"/>
</dbReference>
<dbReference type="PDB" id="7AZS">
    <property type="method" value="X-ray"/>
    <property type="resolution" value="3.10 A"/>
    <property type="chains" value="S13A/S13B=1-126"/>
</dbReference>
<dbReference type="PDB" id="7DUG">
    <property type="method" value="X-ray"/>
    <property type="resolution" value="3.75 A"/>
    <property type="chains" value="M=1-126"/>
</dbReference>
<dbReference type="PDB" id="7DUH">
    <property type="method" value="X-ray"/>
    <property type="resolution" value="3.75 A"/>
    <property type="chains" value="M=1-126"/>
</dbReference>
<dbReference type="PDB" id="7DUI">
    <property type="method" value="X-ray"/>
    <property type="resolution" value="3.62 A"/>
    <property type="chains" value="M=1-126"/>
</dbReference>
<dbReference type="PDB" id="7DUJ">
    <property type="method" value="X-ray"/>
    <property type="resolution" value="3.75 A"/>
    <property type="chains" value="M=1-126"/>
</dbReference>
<dbReference type="PDB" id="7DUK">
    <property type="method" value="X-ray"/>
    <property type="resolution" value="3.60 A"/>
    <property type="chains" value="M=1-126"/>
</dbReference>
<dbReference type="PDB" id="7DUL">
    <property type="method" value="X-ray"/>
    <property type="resolution" value="3.62 A"/>
    <property type="chains" value="M=1-126"/>
</dbReference>
<dbReference type="PDB" id="7JQL">
    <property type="method" value="X-ray"/>
    <property type="resolution" value="3.00 A"/>
    <property type="chains" value="1m/2m=1-126"/>
</dbReference>
<dbReference type="PDB" id="7JQM">
    <property type="method" value="X-ray"/>
    <property type="resolution" value="3.05 A"/>
    <property type="chains" value="1m/2m=1-126"/>
</dbReference>
<dbReference type="PDB" id="7LH5">
    <property type="method" value="X-ray"/>
    <property type="resolution" value="3.27 A"/>
    <property type="chains" value="AM/CM=1-126"/>
</dbReference>
<dbReference type="PDB" id="7MD7">
    <property type="method" value="X-ray"/>
    <property type="resolution" value="2.80 A"/>
    <property type="chains" value="1m/2m=1-126"/>
</dbReference>
<dbReference type="PDB" id="7RQ8">
    <property type="method" value="X-ray"/>
    <property type="resolution" value="2.50 A"/>
    <property type="chains" value="1m/2m=1-126"/>
</dbReference>
<dbReference type="PDB" id="7RQ9">
    <property type="method" value="X-ray"/>
    <property type="resolution" value="2.60 A"/>
    <property type="chains" value="1m/2m=1-126"/>
</dbReference>
<dbReference type="PDB" id="7RQA">
    <property type="method" value="X-ray"/>
    <property type="resolution" value="2.40 A"/>
    <property type="chains" value="1m/2m=1-126"/>
</dbReference>
<dbReference type="PDB" id="7RQB">
    <property type="method" value="X-ray"/>
    <property type="resolution" value="2.45 A"/>
    <property type="chains" value="1m/2m=1-126"/>
</dbReference>
<dbReference type="PDB" id="7RQC">
    <property type="method" value="X-ray"/>
    <property type="resolution" value="2.50 A"/>
    <property type="chains" value="1m/2m=1-126"/>
</dbReference>
<dbReference type="PDB" id="7RQD">
    <property type="method" value="X-ray"/>
    <property type="resolution" value="2.50 A"/>
    <property type="chains" value="1m/2m=1-126"/>
</dbReference>
<dbReference type="PDB" id="7RQE">
    <property type="method" value="X-ray"/>
    <property type="resolution" value="2.40 A"/>
    <property type="chains" value="1m/2m=1-126"/>
</dbReference>
<dbReference type="PDB" id="7U2H">
    <property type="method" value="X-ray"/>
    <property type="resolution" value="2.55 A"/>
    <property type="chains" value="1m/2m=1-126"/>
</dbReference>
<dbReference type="PDB" id="7U2I">
    <property type="method" value="X-ray"/>
    <property type="resolution" value="2.55 A"/>
    <property type="chains" value="1m/2m=1-126"/>
</dbReference>
<dbReference type="PDB" id="7U2J">
    <property type="method" value="X-ray"/>
    <property type="resolution" value="2.55 A"/>
    <property type="chains" value="1m/2m=1-126"/>
</dbReference>
<dbReference type="PDB" id="7V2L">
    <property type="method" value="EM"/>
    <property type="resolution" value="3.30 A"/>
    <property type="chains" value="M=1-126"/>
</dbReference>
<dbReference type="PDB" id="7V2M">
    <property type="method" value="EM"/>
    <property type="resolution" value="3.40 A"/>
    <property type="chains" value="M=1-126"/>
</dbReference>
<dbReference type="PDB" id="7V2N">
    <property type="method" value="EM"/>
    <property type="resolution" value="3.60 A"/>
    <property type="chains" value="M=1-126"/>
</dbReference>
<dbReference type="PDB" id="7V2O">
    <property type="method" value="EM"/>
    <property type="resolution" value="3.50 A"/>
    <property type="chains" value="M=1-126"/>
</dbReference>
<dbReference type="PDB" id="7V2P">
    <property type="method" value="EM"/>
    <property type="resolution" value="3.30 A"/>
    <property type="chains" value="M=1-126"/>
</dbReference>
<dbReference type="PDB" id="7V2Q">
    <property type="method" value="EM"/>
    <property type="resolution" value="3.24 A"/>
    <property type="chains" value="M=1-126"/>
</dbReference>
<dbReference type="PDB" id="8CVJ">
    <property type="method" value="X-ray"/>
    <property type="resolution" value="2.40 A"/>
    <property type="chains" value="1m/2m=1-126"/>
</dbReference>
<dbReference type="PDB" id="8CVK">
    <property type="method" value="X-ray"/>
    <property type="resolution" value="2.50 A"/>
    <property type="chains" value="1m/2m=1-126"/>
</dbReference>
<dbReference type="PDB" id="8CVL">
    <property type="method" value="X-ray"/>
    <property type="resolution" value="2.30 A"/>
    <property type="chains" value="1m/2m=1-126"/>
</dbReference>
<dbReference type="PDB" id="8EKB">
    <property type="method" value="X-ray"/>
    <property type="resolution" value="2.70 A"/>
    <property type="chains" value="1m/2m=1-126"/>
</dbReference>
<dbReference type="PDB" id="8EV6">
    <property type="method" value="X-ray"/>
    <property type="resolution" value="2.95 A"/>
    <property type="chains" value="1m/2m=1-126"/>
</dbReference>
<dbReference type="PDB" id="8EV7">
    <property type="method" value="X-ray"/>
    <property type="resolution" value="2.89 A"/>
    <property type="chains" value="1m/2m=1-126"/>
</dbReference>
<dbReference type="PDB" id="8FC1">
    <property type="method" value="X-ray"/>
    <property type="resolution" value="2.50 A"/>
    <property type="chains" value="1m/2m=1-126"/>
</dbReference>
<dbReference type="PDB" id="8FC2">
    <property type="method" value="X-ray"/>
    <property type="resolution" value="2.50 A"/>
    <property type="chains" value="1m/2m=1-126"/>
</dbReference>
<dbReference type="PDB" id="8FC3">
    <property type="method" value="X-ray"/>
    <property type="resolution" value="2.60 A"/>
    <property type="chains" value="1m/2m=1-126"/>
</dbReference>
<dbReference type="PDB" id="8FC4">
    <property type="method" value="X-ray"/>
    <property type="resolution" value="2.45 A"/>
    <property type="chains" value="1m/2m=1-126"/>
</dbReference>
<dbReference type="PDB" id="8FC5">
    <property type="method" value="X-ray"/>
    <property type="resolution" value="2.65 A"/>
    <property type="chains" value="1m/2m=1-126"/>
</dbReference>
<dbReference type="PDB" id="8FC6">
    <property type="method" value="X-ray"/>
    <property type="resolution" value="2.35 A"/>
    <property type="chains" value="1m/2m=1-126"/>
</dbReference>
<dbReference type="PDB" id="8FOM">
    <property type="method" value="X-ray"/>
    <property type="resolution" value="3.58 A"/>
    <property type="chains" value="QM/XM=1-126"/>
</dbReference>
<dbReference type="PDB" id="8FON">
    <property type="method" value="X-ray"/>
    <property type="resolution" value="3.64 A"/>
    <property type="chains" value="QM/XM=1-126"/>
</dbReference>
<dbReference type="PDB" id="8G29">
    <property type="method" value="X-ray"/>
    <property type="resolution" value="2.55 A"/>
    <property type="chains" value="1m/2m=1-126"/>
</dbReference>
<dbReference type="PDB" id="8G2A">
    <property type="method" value="X-ray"/>
    <property type="resolution" value="2.45 A"/>
    <property type="chains" value="1m/2m=1-126"/>
</dbReference>
<dbReference type="PDB" id="8G2B">
    <property type="method" value="X-ray"/>
    <property type="resolution" value="2.55 A"/>
    <property type="chains" value="1m/2m=1-126"/>
</dbReference>
<dbReference type="PDB" id="8G2C">
    <property type="method" value="X-ray"/>
    <property type="resolution" value="2.65 A"/>
    <property type="chains" value="1m/2m=1-126"/>
</dbReference>
<dbReference type="PDB" id="8G2D">
    <property type="method" value="X-ray"/>
    <property type="resolution" value="2.70 A"/>
    <property type="chains" value="1m/2m=1-126"/>
</dbReference>
<dbReference type="PDB" id="8T8B">
    <property type="method" value="X-ray"/>
    <property type="resolution" value="2.65 A"/>
    <property type="chains" value="1m/2m=1-126"/>
</dbReference>
<dbReference type="PDB" id="8T8C">
    <property type="method" value="X-ray"/>
    <property type="resolution" value="2.60 A"/>
    <property type="chains" value="1m/2m=1-126"/>
</dbReference>
<dbReference type="PDB" id="8UD6">
    <property type="method" value="X-ray"/>
    <property type="resolution" value="2.70 A"/>
    <property type="chains" value="1m/2m=1-126"/>
</dbReference>
<dbReference type="PDB" id="8UD7">
    <property type="method" value="X-ray"/>
    <property type="resolution" value="2.55 A"/>
    <property type="chains" value="1m/2m=1-126"/>
</dbReference>
<dbReference type="PDB" id="8UD8">
    <property type="method" value="X-ray"/>
    <property type="resolution" value="2.60 A"/>
    <property type="chains" value="1m/2m=1-126"/>
</dbReference>
<dbReference type="PDB" id="8UVR">
    <property type="method" value="X-ray"/>
    <property type="resolution" value="2.60 A"/>
    <property type="chains" value="1m/2m=1-126"/>
</dbReference>
<dbReference type="PDB" id="8UVS">
    <property type="method" value="X-ray"/>
    <property type="resolution" value="2.75 A"/>
    <property type="chains" value="1m/2m=1-126"/>
</dbReference>
<dbReference type="PDB" id="8VTU">
    <property type="method" value="X-ray"/>
    <property type="resolution" value="2.40 A"/>
    <property type="chains" value="1m/2m=1-126"/>
</dbReference>
<dbReference type="PDB" id="8VTV">
    <property type="method" value="X-ray"/>
    <property type="resolution" value="2.55 A"/>
    <property type="chains" value="1m/2m=1-126"/>
</dbReference>
<dbReference type="PDB" id="8VTW">
    <property type="method" value="X-ray"/>
    <property type="resolution" value="2.35 A"/>
    <property type="chains" value="1m/2m=1-126"/>
</dbReference>
<dbReference type="PDB" id="8VTX">
    <property type="method" value="X-ray"/>
    <property type="resolution" value="2.40 A"/>
    <property type="chains" value="1m/2m=1-126"/>
</dbReference>
<dbReference type="PDB" id="8VTY">
    <property type="method" value="X-ray"/>
    <property type="resolution" value="2.60 A"/>
    <property type="chains" value="1m/2m=1-126"/>
</dbReference>
<dbReference type="PDB" id="9B00">
    <property type="method" value="X-ray"/>
    <property type="resolution" value="2.80 A"/>
    <property type="chains" value="1m/2m=1-126"/>
</dbReference>
<dbReference type="PDB" id="9D0J">
    <property type="method" value="X-ray"/>
    <property type="resolution" value="2.50 A"/>
    <property type="chains" value="1m/2m=1-126"/>
</dbReference>
<dbReference type="PDB" id="9D7R">
    <property type="method" value="X-ray"/>
    <property type="resolution" value="2.70 A"/>
    <property type="chains" value="1m/2m=1-126"/>
</dbReference>
<dbReference type="PDB" id="9D7S">
    <property type="method" value="X-ray"/>
    <property type="resolution" value="2.85 A"/>
    <property type="chains" value="1m/2m=1-126"/>
</dbReference>
<dbReference type="PDB" id="9D7T">
    <property type="method" value="X-ray"/>
    <property type="resolution" value="2.70 A"/>
    <property type="chains" value="1m/2m=1-126"/>
</dbReference>
<dbReference type="PDB" id="9DFC">
    <property type="method" value="X-ray"/>
    <property type="resolution" value="2.50 A"/>
    <property type="chains" value="1m/2m=1-126"/>
</dbReference>
<dbReference type="PDB" id="9DFD">
    <property type="method" value="X-ray"/>
    <property type="resolution" value="2.60 A"/>
    <property type="chains" value="1m/2m=1-126"/>
</dbReference>
<dbReference type="PDB" id="9DFE">
    <property type="method" value="X-ray"/>
    <property type="resolution" value="2.60 A"/>
    <property type="chains" value="1m/2m=1-126"/>
</dbReference>
<dbReference type="PDBsum" id="1FJG"/>
<dbReference type="PDBsum" id="1HNW"/>
<dbReference type="PDBsum" id="1HNX"/>
<dbReference type="PDBsum" id="1HNZ"/>
<dbReference type="PDBsum" id="1HR0"/>
<dbReference type="PDBsum" id="1I94"/>
<dbReference type="PDBsum" id="1I95"/>
<dbReference type="PDBsum" id="1I96"/>
<dbReference type="PDBsum" id="1I97"/>
<dbReference type="PDBsum" id="1IBK"/>
<dbReference type="PDBsum" id="1IBL"/>
<dbReference type="PDBsum" id="1IBM"/>
<dbReference type="PDBsum" id="1J5E"/>
<dbReference type="PDBsum" id="1JGO"/>
<dbReference type="PDBsum" id="1JGP"/>
<dbReference type="PDBsum" id="1JGQ"/>
<dbReference type="PDBsum" id="1MJ1"/>
<dbReference type="PDBsum" id="1ML5"/>
<dbReference type="PDBsum" id="1N32"/>
<dbReference type="PDBsum" id="1N33"/>
<dbReference type="PDBsum" id="1N34"/>
<dbReference type="PDBsum" id="1N36"/>
<dbReference type="PDBsum" id="1VVJ"/>
<dbReference type="PDBsum" id="1VY4"/>
<dbReference type="PDBsum" id="1VY5"/>
<dbReference type="PDBsum" id="1VY6"/>
<dbReference type="PDBsum" id="1VY7"/>
<dbReference type="PDBsum" id="1XMO"/>
<dbReference type="PDBsum" id="1XMQ"/>
<dbReference type="PDBsum" id="1XNQ"/>
<dbReference type="PDBsum" id="1XNR"/>
<dbReference type="PDBsum" id="2E5L"/>
<dbReference type="PDBsum" id="2F4V"/>
<dbReference type="PDBsum" id="2HHH"/>
<dbReference type="PDBsum" id="2UU9"/>
<dbReference type="PDBsum" id="2UUA"/>
<dbReference type="PDBsum" id="2UUB"/>
<dbReference type="PDBsum" id="2UUC"/>
<dbReference type="PDBsum" id="2UXB"/>
<dbReference type="PDBsum" id="2UXC"/>
<dbReference type="PDBsum" id="2UXD"/>
<dbReference type="PDBsum" id="2VQE"/>
<dbReference type="PDBsum" id="2VQF"/>
<dbReference type="PDBsum" id="2ZM6"/>
<dbReference type="PDBsum" id="3OTO"/>
<dbReference type="PDBsum" id="3T1H"/>
<dbReference type="PDBsum" id="3T1Y"/>
<dbReference type="PDBsum" id="4AQY"/>
<dbReference type="PDBsum" id="4B3M"/>
<dbReference type="PDBsum" id="4B3R"/>
<dbReference type="PDBsum" id="4B3S"/>
<dbReference type="PDBsum" id="4B3T"/>
<dbReference type="PDBsum" id="4DR1"/>
<dbReference type="PDBsum" id="4DR2"/>
<dbReference type="PDBsum" id="4DR3"/>
<dbReference type="PDBsum" id="4DR4"/>
<dbReference type="PDBsum" id="4DR5"/>
<dbReference type="PDBsum" id="4DR6"/>
<dbReference type="PDBsum" id="4DR7"/>
<dbReference type="PDBsum" id="4DUY"/>
<dbReference type="PDBsum" id="4DUZ"/>
<dbReference type="PDBsum" id="4DV0"/>
<dbReference type="PDBsum" id="4DV1"/>
<dbReference type="PDBsum" id="4DV2"/>
<dbReference type="PDBsum" id="4DV3"/>
<dbReference type="PDBsum" id="4DV4"/>
<dbReference type="PDBsum" id="4DV5"/>
<dbReference type="PDBsum" id="4DV6"/>
<dbReference type="PDBsum" id="4DV7"/>
<dbReference type="PDBsum" id="4GKJ"/>
<dbReference type="PDBsum" id="4GKK"/>
<dbReference type="PDBsum" id="4JI0"/>
<dbReference type="PDBsum" id="4JI1"/>
<dbReference type="PDBsum" id="4JI2"/>
<dbReference type="PDBsum" id="4JI3"/>
<dbReference type="PDBsum" id="4JI4"/>
<dbReference type="PDBsum" id="4JI5"/>
<dbReference type="PDBsum" id="4JI6"/>
<dbReference type="PDBsum" id="4JI7"/>
<dbReference type="PDBsum" id="4JI8"/>
<dbReference type="PDBsum" id="4JV5"/>
<dbReference type="PDBsum" id="4JYA"/>
<dbReference type="PDBsum" id="4K0K"/>
<dbReference type="PDBsum" id="4KHP"/>
<dbReference type="PDBsum" id="4L47"/>
<dbReference type="PDBsum" id="4L71"/>
<dbReference type="PDBsum" id="4LEL"/>
<dbReference type="PDBsum" id="4LF4"/>
<dbReference type="PDBsum" id="4LF5"/>
<dbReference type="PDBsum" id="4LF6"/>
<dbReference type="PDBsum" id="4LF7"/>
<dbReference type="PDBsum" id="4LF8"/>
<dbReference type="PDBsum" id="4LF9"/>
<dbReference type="PDBsum" id="4LFA"/>
<dbReference type="PDBsum" id="4LFB"/>
<dbReference type="PDBsum" id="4LFC"/>
<dbReference type="PDBsum" id="4LFZ"/>
<dbReference type="PDBsum" id="4LNT"/>
<dbReference type="PDBsum" id="4LSK"/>
<dbReference type="PDBsum" id="4LT8"/>
<dbReference type="PDBsum" id="4NXM"/>
<dbReference type="PDBsum" id="4NXN"/>
<dbReference type="PDBsum" id="4OX9"/>
<dbReference type="PDBsum" id="4P6F"/>
<dbReference type="PDBsum" id="4P70"/>
<dbReference type="PDBsum" id="4TUA"/>
<dbReference type="PDBsum" id="4TUB"/>
<dbReference type="PDBsum" id="4TUC"/>
<dbReference type="PDBsum" id="4TUD"/>
<dbReference type="PDBsum" id="4TUE"/>
<dbReference type="PDBsum" id="4V42"/>
<dbReference type="PDBsum" id="4V49"/>
<dbReference type="PDBsum" id="4V4A"/>
<dbReference type="PDBsum" id="4V4I"/>
<dbReference type="PDBsum" id="4V4P"/>
<dbReference type="PDBsum" id="4V4R"/>
<dbReference type="PDBsum" id="4V4S"/>
<dbReference type="PDBsum" id="4V4T"/>
<dbReference type="PDBsum" id="4V4X"/>
<dbReference type="PDBsum" id="4V4Y"/>
<dbReference type="PDBsum" id="4V4Z"/>
<dbReference type="PDBsum" id="4V51"/>
<dbReference type="PDBsum" id="4V5A"/>
<dbReference type="PDBsum" id="4V5C"/>
<dbReference type="PDBsum" id="4V5D"/>
<dbReference type="PDBsum" id="4V5E"/>
<dbReference type="PDBsum" id="4V5F"/>
<dbReference type="PDBsum" id="4V5G"/>
<dbReference type="PDBsum" id="4V5J"/>
<dbReference type="PDBsum" id="4V5K"/>
<dbReference type="PDBsum" id="4V5L"/>
<dbReference type="PDBsum" id="4V5M"/>
<dbReference type="PDBsum" id="4V5N"/>
<dbReference type="PDBsum" id="4V5P"/>
<dbReference type="PDBsum" id="4V5Q"/>
<dbReference type="PDBsum" id="4V5R"/>
<dbReference type="PDBsum" id="4V5S"/>
<dbReference type="PDBsum" id="4V68"/>
<dbReference type="PDBsum" id="4V6A"/>
<dbReference type="PDBsum" id="4V6F"/>
<dbReference type="PDBsum" id="4V6G"/>
<dbReference type="PDBsum" id="4V7J"/>
<dbReference type="PDBsum" id="4V7K"/>
<dbReference type="PDBsum" id="4V7L"/>
<dbReference type="PDBsum" id="4V7M"/>
<dbReference type="PDBsum" id="4V7W"/>
<dbReference type="PDBsum" id="4V7X"/>
<dbReference type="PDBsum" id="4V7Y"/>
<dbReference type="PDBsum" id="4V7Z"/>
<dbReference type="PDBsum" id="4V87"/>
<dbReference type="PDBsum" id="4V8A"/>
<dbReference type="PDBsum" id="4V8B"/>
<dbReference type="PDBsum" id="4V8C"/>
<dbReference type="PDBsum" id="4V8D"/>
<dbReference type="PDBsum" id="4V8E"/>
<dbReference type="PDBsum" id="4V8F"/>
<dbReference type="PDBsum" id="4V8G"/>
<dbReference type="PDBsum" id="4V8H"/>
<dbReference type="PDBsum" id="4V8I"/>
<dbReference type="PDBsum" id="4V8J"/>
<dbReference type="PDBsum" id="4V8N"/>
<dbReference type="PDBsum" id="4V8O"/>
<dbReference type="PDBsum" id="4V8Q"/>
<dbReference type="PDBsum" id="4V8U"/>
<dbReference type="PDBsum" id="4V8X"/>
<dbReference type="PDBsum" id="4V90"/>
<dbReference type="PDBsum" id="4V95"/>
<dbReference type="PDBsum" id="4V97"/>
<dbReference type="PDBsum" id="4V9A"/>
<dbReference type="PDBsum" id="4V9B"/>
<dbReference type="PDBsum" id="4V9H"/>
<dbReference type="PDBsum" id="4V9I"/>
<dbReference type="PDBsum" id="4V9R"/>
<dbReference type="PDBsum" id="4V9S"/>
<dbReference type="PDBsum" id="4W2E"/>
<dbReference type="PDBsum" id="4W2F"/>
<dbReference type="PDBsum" id="4W2G"/>
<dbReference type="PDBsum" id="4W2H"/>
<dbReference type="PDBsum" id="4W2I"/>
<dbReference type="PDBsum" id="4W4G"/>
<dbReference type="PDBsum" id="4WPO"/>
<dbReference type="PDBsum" id="4WQ1"/>
<dbReference type="PDBsum" id="4WQF"/>
<dbReference type="PDBsum" id="4WQR"/>
<dbReference type="PDBsum" id="4WQU"/>
<dbReference type="PDBsum" id="4WQY"/>
<dbReference type="PDBsum" id="4WR6"/>
<dbReference type="PDBsum" id="4WRA"/>
<dbReference type="PDBsum" id="4WRO"/>
<dbReference type="PDBsum" id="4WSD"/>
<dbReference type="PDBsum" id="4WSM"/>
<dbReference type="PDBsum" id="4WT1"/>
<dbReference type="PDBsum" id="4WT8"/>
<dbReference type="PDBsum" id="4WU1"/>
<dbReference type="PDBsum" id="4WZD"/>
<dbReference type="PDBsum" id="4WZO"/>
<dbReference type="PDBsum" id="4X62"/>
<dbReference type="PDBsum" id="4X64"/>
<dbReference type="PDBsum" id="4X65"/>
<dbReference type="PDBsum" id="4X66"/>
<dbReference type="PDBsum" id="4Y4O"/>
<dbReference type="PDBsum" id="4Y4P"/>
<dbReference type="PDBsum" id="4YHH"/>
<dbReference type="PDBsum" id="4YPB"/>
<dbReference type="PDBsum" id="4YY3"/>
<dbReference type="PDBsum" id="4YZV"/>
<dbReference type="PDBsum" id="4Z3S"/>
<dbReference type="PDBsum" id="4Z8C"/>
<dbReference type="PDBsum" id="4ZER"/>
<dbReference type="PDBsum" id="4ZSN"/>
<dbReference type="PDBsum" id="5A9Z"/>
<dbReference type="PDBsum" id="5AA0"/>
<dbReference type="PDBsum" id="5BR8"/>
<dbReference type="PDBsum" id="5CZP"/>
<dbReference type="PDBsum" id="5D8B"/>
<dbReference type="PDBsum" id="5DFE"/>
<dbReference type="PDBsum" id="5DOX"/>
<dbReference type="PDBsum" id="5DOY"/>
<dbReference type="PDBsum" id="5E7K"/>
<dbReference type="PDBsum" id="5E81"/>
<dbReference type="PDBsum" id="5EL4"/>
<dbReference type="PDBsum" id="5EL5"/>
<dbReference type="PDBsum" id="5EL6"/>
<dbReference type="PDBsum" id="5EL7"/>
<dbReference type="PDBsum" id="5F8K"/>
<dbReference type="PDBsum" id="5FDU"/>
<dbReference type="PDBsum" id="5FDV"/>
<dbReference type="PDBsum" id="5HAU"/>
<dbReference type="PDBsum" id="5HCP"/>
<dbReference type="PDBsum" id="5HCQ"/>
<dbReference type="PDBsum" id="5HCR"/>
<dbReference type="PDBsum" id="5HD1"/>
<dbReference type="PDBsum" id="5IB7"/>
<dbReference type="PDBsum" id="5IB8"/>
<dbReference type="PDBsum" id="5IBB"/>
<dbReference type="PDBsum" id="5IMQ"/>
<dbReference type="PDBsum" id="5IMR"/>
<dbReference type="PDBsum" id="5IWA"/>
<dbReference type="PDBsum" id="5J30"/>
<dbReference type="PDBsum" id="5J3C"/>
<dbReference type="PDBsum" id="5J4B"/>
<dbReference type="PDBsum" id="5J4C"/>
<dbReference type="PDBsum" id="5J8B"/>
<dbReference type="PDBsum" id="5LMN"/>
<dbReference type="PDBsum" id="5LMO"/>
<dbReference type="PDBsum" id="5LMP"/>
<dbReference type="PDBsum" id="5LMQ"/>
<dbReference type="PDBsum" id="5LMR"/>
<dbReference type="PDBsum" id="5LMS"/>
<dbReference type="PDBsum" id="5LMT"/>
<dbReference type="PDBsum" id="5LMU"/>
<dbReference type="PDBsum" id="5LMV"/>
<dbReference type="PDBsum" id="5NDJ"/>
<dbReference type="PDBsum" id="5NDK"/>
<dbReference type="PDBsum" id="5OT7"/>
<dbReference type="PDBsum" id="5UQ7"/>
<dbReference type="PDBsum" id="5UQ8"/>
<dbReference type="PDBsum" id="5VP2"/>
<dbReference type="PDBsum" id="5VPO"/>
<dbReference type="PDBsum" id="5VPP"/>
<dbReference type="PDBsum" id="5W4K"/>
<dbReference type="PDBsum" id="5WIS"/>
<dbReference type="PDBsum" id="5WIT"/>
<dbReference type="PDBsum" id="5WNP"/>
<dbReference type="PDBsum" id="5WNQ"/>
<dbReference type="PDBsum" id="5WNR"/>
<dbReference type="PDBsum" id="5WNS"/>
<dbReference type="PDBsum" id="5WNT"/>
<dbReference type="PDBsum" id="5WNU"/>
<dbReference type="PDBsum" id="5WNV"/>
<dbReference type="PDBsum" id="5ZLU"/>
<dbReference type="PDBsum" id="6BUW"/>
<dbReference type="PDBsum" id="6BZ6"/>
<dbReference type="PDBsum" id="6BZ7"/>
<dbReference type="PDBsum" id="6BZ8"/>
<dbReference type="PDBsum" id="6C5L"/>
<dbReference type="PDBsum" id="6CAE"/>
<dbReference type="PDBsum" id="6CAO"/>
<dbReference type="PDBsum" id="6CAP"/>
<dbReference type="PDBsum" id="6CAQ"/>
<dbReference type="PDBsum" id="6CAR"/>
<dbReference type="PDBsum" id="6CAS"/>
<dbReference type="PDBsum" id="6CFJ"/>
<dbReference type="PDBsum" id="6CFK"/>
<dbReference type="PDBsum" id="6CFL"/>
<dbReference type="PDBsum" id="6CZR"/>
<dbReference type="PDBsum" id="6DTI"/>
<dbReference type="PDBsum" id="6FKR"/>
<dbReference type="PDBsum" id="6GSJ"/>
<dbReference type="PDBsum" id="6GSK"/>
<dbReference type="PDBsum" id="6GSL"/>
<dbReference type="PDBsum" id="6GZQ"/>
<dbReference type="PDBsum" id="6GZX"/>
<dbReference type="PDBsum" id="6GZZ"/>
<dbReference type="PDBsum" id="6MKN"/>
<dbReference type="PDBsum" id="6MPF"/>
<dbReference type="PDBsum" id="6MPI"/>
<dbReference type="PDBsum" id="6N9E"/>
<dbReference type="PDBsum" id="6N9F"/>
<dbReference type="PDBsum" id="6ND5"/>
<dbReference type="PDBsum" id="6ND6"/>
<dbReference type="PDBsum" id="6NDK"/>
<dbReference type="PDBsum" id="6NSH"/>
<dbReference type="PDBsum" id="6NTA"/>
<dbReference type="PDBsum" id="6NUO"/>
<dbReference type="PDBsum" id="6NWY"/>
<dbReference type="PDBsum" id="6NY6"/>
<dbReference type="PDBsum" id="6O3M"/>
<dbReference type="PDBsum" id="6O97"/>
<dbReference type="PDBsum" id="6OF1"/>
<dbReference type="PDBsum" id="6OF6"/>
<dbReference type="PDBsum" id="6OJ2"/>
<dbReference type="PDBsum" id="6OPE"/>
<dbReference type="PDBsum" id="6ORD"/>
<dbReference type="PDBsum" id="6OSI"/>
<dbReference type="PDBsum" id="6OTR"/>
<dbReference type="PDBsum" id="6OXA"/>
<dbReference type="PDBsum" id="6OXI"/>
<dbReference type="PDBsum" id="6Q95"/>
<dbReference type="PDBsum" id="6QNQ"/>
<dbReference type="PDBsum" id="6QNR"/>
<dbReference type="PDBsum" id="6UCQ"/>
<dbReference type="PDBsum" id="6UO1"/>
<dbReference type="PDBsum" id="6XHV"/>
<dbReference type="PDBsum" id="6XHW"/>
<dbReference type="PDBsum" id="6XHX"/>
<dbReference type="PDBsum" id="6XHY"/>
<dbReference type="PDBsum" id="6XQD"/>
<dbReference type="PDBsum" id="6XQE"/>
<dbReference type="PDBsum" id="7AZO"/>
<dbReference type="PDBsum" id="7AZS"/>
<dbReference type="PDBsum" id="7DUG"/>
<dbReference type="PDBsum" id="7DUH"/>
<dbReference type="PDBsum" id="7DUI"/>
<dbReference type="PDBsum" id="7DUJ"/>
<dbReference type="PDBsum" id="7DUK"/>
<dbReference type="PDBsum" id="7DUL"/>
<dbReference type="PDBsum" id="7JQL"/>
<dbReference type="PDBsum" id="7JQM"/>
<dbReference type="PDBsum" id="7LH5"/>
<dbReference type="PDBsum" id="7MD7"/>
<dbReference type="PDBsum" id="7RQ8"/>
<dbReference type="PDBsum" id="7RQ9"/>
<dbReference type="PDBsum" id="7RQA"/>
<dbReference type="PDBsum" id="7RQB"/>
<dbReference type="PDBsum" id="7RQC"/>
<dbReference type="PDBsum" id="7RQD"/>
<dbReference type="PDBsum" id="7RQE"/>
<dbReference type="PDBsum" id="7U2H"/>
<dbReference type="PDBsum" id="7U2I"/>
<dbReference type="PDBsum" id="7U2J"/>
<dbReference type="PDBsum" id="7V2L"/>
<dbReference type="PDBsum" id="7V2M"/>
<dbReference type="PDBsum" id="7V2N"/>
<dbReference type="PDBsum" id="7V2O"/>
<dbReference type="PDBsum" id="7V2P"/>
<dbReference type="PDBsum" id="7V2Q"/>
<dbReference type="PDBsum" id="8CVJ"/>
<dbReference type="PDBsum" id="8CVK"/>
<dbReference type="PDBsum" id="8CVL"/>
<dbReference type="PDBsum" id="8EKB"/>
<dbReference type="PDBsum" id="8EV6"/>
<dbReference type="PDBsum" id="8EV7"/>
<dbReference type="PDBsum" id="8FC1"/>
<dbReference type="PDBsum" id="8FC2"/>
<dbReference type="PDBsum" id="8FC3"/>
<dbReference type="PDBsum" id="8FC4"/>
<dbReference type="PDBsum" id="8FC5"/>
<dbReference type="PDBsum" id="8FC6"/>
<dbReference type="PDBsum" id="8FOM"/>
<dbReference type="PDBsum" id="8FON"/>
<dbReference type="PDBsum" id="8G29"/>
<dbReference type="PDBsum" id="8G2A"/>
<dbReference type="PDBsum" id="8G2B"/>
<dbReference type="PDBsum" id="8G2C"/>
<dbReference type="PDBsum" id="8G2D"/>
<dbReference type="PDBsum" id="8T8B"/>
<dbReference type="PDBsum" id="8T8C"/>
<dbReference type="PDBsum" id="8UD6"/>
<dbReference type="PDBsum" id="8UD7"/>
<dbReference type="PDBsum" id="8UD8"/>
<dbReference type="PDBsum" id="8UVR"/>
<dbReference type="PDBsum" id="8UVS"/>
<dbReference type="PDBsum" id="8VTU"/>
<dbReference type="PDBsum" id="8VTV"/>
<dbReference type="PDBsum" id="8VTW"/>
<dbReference type="PDBsum" id="8VTX"/>
<dbReference type="PDBsum" id="8VTY"/>
<dbReference type="PDBsum" id="9B00"/>
<dbReference type="PDBsum" id="9D0J"/>
<dbReference type="PDBsum" id="9D7R"/>
<dbReference type="PDBsum" id="9D7S"/>
<dbReference type="PDBsum" id="9D7T"/>
<dbReference type="PDBsum" id="9DFC"/>
<dbReference type="PDBsum" id="9DFD"/>
<dbReference type="PDBsum" id="9DFE"/>
<dbReference type="EMDB" id="EMD-0101"/>
<dbReference type="EMDB" id="EMD-0104"/>
<dbReference type="EMDB" id="EMD-0105"/>
<dbReference type="EMDB" id="EMD-31655"/>
<dbReference type="EMDB" id="EMD-31656"/>
<dbReference type="EMDB" id="EMD-31657"/>
<dbReference type="EMDB" id="EMD-31658"/>
<dbReference type="EMDB" id="EMD-31659"/>
<dbReference type="EMDB" id="EMD-31660"/>
<dbReference type="EMDB" id="EMD-3852"/>
<dbReference type="EMDB" id="EMD-4073"/>
<dbReference type="EMDB" id="EMD-4074"/>
<dbReference type="EMDB" id="EMD-4075"/>
<dbReference type="EMDB" id="EMD-4076"/>
<dbReference type="EMDB" id="EMD-4077"/>
<dbReference type="EMDB" id="EMD-4078"/>
<dbReference type="EMDB" id="EMD-4079"/>
<dbReference type="EMDB" id="EMD-4080"/>
<dbReference type="EMDB" id="EMD-4083"/>
<dbReference type="EMDB" id="EMD-4475"/>
<dbReference type="EMDB" id="EMD-6934"/>
<dbReference type="EMDB" id="EMD-8596"/>
<dbReference type="EMDB" id="EMD-8597"/>
<dbReference type="SMR" id="P80377"/>
<dbReference type="IntAct" id="P80377">
    <property type="interactions" value="10"/>
</dbReference>
<dbReference type="DrugBank" id="DB08185">
    <property type="generic name" value="2-METHYLTHIO-N6-ISOPENTENYL-ADENOSINE-5'-MONOPHOSPHATE"/>
</dbReference>
<dbReference type="EnsemblBacteria" id="BAD71490">
    <property type="protein sequence ID" value="BAD71490"/>
    <property type="gene ID" value="BAD71490"/>
</dbReference>
<dbReference type="GeneID" id="3167962"/>
<dbReference type="KEGG" id="ttj:TTHA1667"/>
<dbReference type="PATRIC" id="fig|300852.9.peg.1637"/>
<dbReference type="eggNOG" id="COG0099">
    <property type="taxonomic scope" value="Bacteria"/>
</dbReference>
<dbReference type="HOGENOM" id="CLU_103849_1_2_0"/>
<dbReference type="PhylomeDB" id="P80377"/>
<dbReference type="EvolutionaryTrace" id="P80377"/>
<dbReference type="Proteomes" id="UP000000532">
    <property type="component" value="Chromosome"/>
</dbReference>
<dbReference type="GO" id="GO:0005829">
    <property type="term" value="C:cytosol"/>
    <property type="evidence" value="ECO:0007669"/>
    <property type="project" value="TreeGrafter"/>
</dbReference>
<dbReference type="GO" id="GO:0015935">
    <property type="term" value="C:small ribosomal subunit"/>
    <property type="evidence" value="ECO:0007669"/>
    <property type="project" value="TreeGrafter"/>
</dbReference>
<dbReference type="GO" id="GO:0019843">
    <property type="term" value="F:rRNA binding"/>
    <property type="evidence" value="ECO:0007669"/>
    <property type="project" value="UniProtKB-UniRule"/>
</dbReference>
<dbReference type="GO" id="GO:0003735">
    <property type="term" value="F:structural constituent of ribosome"/>
    <property type="evidence" value="ECO:0007669"/>
    <property type="project" value="InterPro"/>
</dbReference>
<dbReference type="GO" id="GO:0000049">
    <property type="term" value="F:tRNA binding"/>
    <property type="evidence" value="ECO:0007669"/>
    <property type="project" value="UniProtKB-UniRule"/>
</dbReference>
<dbReference type="GO" id="GO:0006412">
    <property type="term" value="P:translation"/>
    <property type="evidence" value="ECO:0007669"/>
    <property type="project" value="UniProtKB-UniRule"/>
</dbReference>
<dbReference type="FunFam" id="1.10.8.50:FF:000001">
    <property type="entry name" value="30S ribosomal protein S13"/>
    <property type="match status" value="1"/>
</dbReference>
<dbReference type="FunFam" id="4.10.910.10:FF:000001">
    <property type="entry name" value="30S ribosomal protein S13"/>
    <property type="match status" value="1"/>
</dbReference>
<dbReference type="Gene3D" id="1.10.8.50">
    <property type="match status" value="1"/>
</dbReference>
<dbReference type="Gene3D" id="4.10.910.10">
    <property type="entry name" value="30s ribosomal protein s13, domain 2"/>
    <property type="match status" value="1"/>
</dbReference>
<dbReference type="HAMAP" id="MF_01315">
    <property type="entry name" value="Ribosomal_uS13"/>
    <property type="match status" value="1"/>
</dbReference>
<dbReference type="InterPro" id="IPR027437">
    <property type="entry name" value="Rbsml_uS13_C"/>
</dbReference>
<dbReference type="InterPro" id="IPR001892">
    <property type="entry name" value="Ribosomal_uS13"/>
</dbReference>
<dbReference type="InterPro" id="IPR010979">
    <property type="entry name" value="Ribosomal_uS13-like_H2TH"/>
</dbReference>
<dbReference type="InterPro" id="IPR019980">
    <property type="entry name" value="Ribosomal_uS13_bac-type"/>
</dbReference>
<dbReference type="InterPro" id="IPR018269">
    <property type="entry name" value="Ribosomal_uS13_CS"/>
</dbReference>
<dbReference type="NCBIfam" id="TIGR03631">
    <property type="entry name" value="uS13_bact"/>
    <property type="match status" value="1"/>
</dbReference>
<dbReference type="PANTHER" id="PTHR10871">
    <property type="entry name" value="30S RIBOSOMAL PROTEIN S13/40S RIBOSOMAL PROTEIN S18"/>
    <property type="match status" value="1"/>
</dbReference>
<dbReference type="PANTHER" id="PTHR10871:SF1">
    <property type="entry name" value="SMALL RIBOSOMAL SUBUNIT PROTEIN US13M"/>
    <property type="match status" value="1"/>
</dbReference>
<dbReference type="Pfam" id="PF00416">
    <property type="entry name" value="Ribosomal_S13"/>
    <property type="match status" value="1"/>
</dbReference>
<dbReference type="PIRSF" id="PIRSF002134">
    <property type="entry name" value="Ribosomal_S13"/>
    <property type="match status" value="1"/>
</dbReference>
<dbReference type="SUPFAM" id="SSF46946">
    <property type="entry name" value="S13-like H2TH domain"/>
    <property type="match status" value="1"/>
</dbReference>
<dbReference type="PROSITE" id="PS00646">
    <property type="entry name" value="RIBOSOMAL_S13_1"/>
    <property type="match status" value="1"/>
</dbReference>
<dbReference type="PROSITE" id="PS50159">
    <property type="entry name" value="RIBOSOMAL_S13_2"/>
    <property type="match status" value="1"/>
</dbReference>
<accession>P80377</accession>
<accession>Q5SHR3</accession>
<accession>Q9RA65</accession>
<sequence>MARIAGVEIPRNKRVDVALTYIYGIGKARAKEALEKTGINPATRVKDLTEAEVVRLREYVENTWKLEGELRAEVAANIKRLMDIGCYRGLRHRRGLPVRGQRTRTNARTRKGPRKTVAGKKKAPRK</sequence>
<organism>
    <name type="scientific">Thermus thermophilus (strain ATCC 27634 / DSM 579 / HB8)</name>
    <dbReference type="NCBI Taxonomy" id="300852"/>
    <lineage>
        <taxon>Bacteria</taxon>
        <taxon>Thermotogati</taxon>
        <taxon>Deinococcota</taxon>
        <taxon>Deinococci</taxon>
        <taxon>Thermales</taxon>
        <taxon>Thermaceae</taxon>
        <taxon>Thermus</taxon>
    </lineage>
</organism>
<comment type="function">
    <text>Located at the top of the head of the 30S subunit, it contacts several helices of the 16S rRNA. In the 70S ribosome structure it contacts the 23S rRNA (bridge B1a) and protein L5 of the 50S subunit (bridge B1b), connecting the top of the two subunits; these bridges are in contact with the A site and P site tRNAs respectively and are implicated in movement during ribosome translocation. Separately contacts the tRNAs in the A and P sites.</text>
</comment>
<comment type="subunit">
    <text>Part of the 30S ribosomal subunit. Forms a loose heterodimer with protein S19. Forms two bridges to the 50S subunit in the 70S ribosome, contacting protein L5 and the 23S rRNA; these bridges are straddled by the 5S rRNA.</text>
</comment>
<comment type="mass spectrometry"/>
<comment type="similarity">
    <text evidence="4">Belongs to the universal ribosomal protein uS13 family.</text>
</comment>
<feature type="initiator methionine" description="Removed" evidence="3">
    <location>
        <position position="1"/>
    </location>
</feature>
<feature type="chain" id="PRO_0000132160" description="Small ribosomal subunit protein uS13">
    <location>
        <begin position="2"/>
        <end position="126"/>
    </location>
</feature>
<feature type="region of interest" description="Disordered" evidence="1">
    <location>
        <begin position="95"/>
        <end position="126"/>
    </location>
</feature>
<feature type="helix" evidence="6">
    <location>
        <begin position="5"/>
        <end position="7"/>
    </location>
</feature>
<feature type="strand" evidence="8">
    <location>
        <begin position="12"/>
        <end position="14"/>
    </location>
</feature>
<feature type="helix" evidence="8">
    <location>
        <begin position="15"/>
        <end position="19"/>
    </location>
</feature>
<feature type="strand" evidence="8">
    <location>
        <begin position="22"/>
        <end position="24"/>
    </location>
</feature>
<feature type="helix" evidence="8">
    <location>
        <begin position="28"/>
        <end position="33"/>
    </location>
</feature>
<feature type="turn" evidence="8">
    <location>
        <begin position="34"/>
        <end position="38"/>
    </location>
</feature>
<feature type="strand" evidence="5">
    <location>
        <begin position="41"/>
        <end position="44"/>
    </location>
</feature>
<feature type="helix" evidence="8">
    <location>
        <begin position="45"/>
        <end position="47"/>
    </location>
</feature>
<feature type="helix" evidence="8">
    <location>
        <begin position="50"/>
        <end position="61"/>
    </location>
</feature>
<feature type="strand" evidence="9">
    <location>
        <begin position="62"/>
        <end position="64"/>
    </location>
</feature>
<feature type="helix" evidence="8">
    <location>
        <begin position="67"/>
        <end position="83"/>
    </location>
</feature>
<feature type="helix" evidence="8">
    <location>
        <begin position="87"/>
        <end position="93"/>
    </location>
</feature>
<feature type="strand" evidence="8">
    <location>
        <begin position="98"/>
        <end position="100"/>
    </location>
</feature>
<feature type="strand" evidence="6">
    <location>
        <begin position="104"/>
        <end position="106"/>
    </location>
</feature>
<feature type="helix" evidence="8">
    <location>
        <begin position="108"/>
        <end position="111"/>
    </location>
</feature>
<feature type="strand" evidence="7">
    <location>
        <begin position="121"/>
        <end position="123"/>
    </location>
</feature>